<organism>
    <name type="scientific">Homo sapiens</name>
    <name type="common">Human</name>
    <dbReference type="NCBI Taxonomy" id="9606"/>
    <lineage>
        <taxon>Eukaryota</taxon>
        <taxon>Metazoa</taxon>
        <taxon>Chordata</taxon>
        <taxon>Craniata</taxon>
        <taxon>Vertebrata</taxon>
        <taxon>Euteleostomi</taxon>
        <taxon>Mammalia</taxon>
        <taxon>Eutheria</taxon>
        <taxon>Euarchontoglires</taxon>
        <taxon>Primates</taxon>
        <taxon>Haplorrhini</taxon>
        <taxon>Catarrhini</taxon>
        <taxon>Hominidae</taxon>
        <taxon>Homo</taxon>
    </lineage>
</organism>
<comment type="function">
    <text evidence="8 10 11 12 13 14 16 19 20">Chromatin reader protein that specifically recognizes and binds histone H4 acetylated at 'Lys-5' and 'Lys-12' (H4K5ac and H4K12ac, respectively), thereby controlling gene expression and remodeling chromatin structures (PubMed:17148447, PubMed:17848202, PubMed:18406326, PubMed:20048151, PubMed:20709061, PubMed:20871596). Recruits transcription factors and coactivators to target gene sites, and activates RNA polymerase II machinery for transcriptional elongation (PubMed:28262505). Plays a key role in genome compartmentalization via its association with CTCF and cohesin: recruited to chromatin by CTCF and promotes formation of topologically associating domains (TADs) via its ability to bind acetylated histones, contributing to CTCF boundary formation and enhancer insulation (PubMed:35410381). Also recognizes and binds acetylated non-histone proteins, such as STAT3 (PubMed:28262505). Involved in inflammatory response by regulating differentiation of naive CD4(+) T-cells into T-helper Th17: recognizes and binds STAT3 acetylated at 'Lys-87', promoting STAT3 recruitment to chromatin (PubMed:28262505). In addition to acetylated lysines, also recognizes and binds lysine residues on histones that are both methylated and acetylated on the same side chain to form N6-acetyl-N6-methyllysine (Kacme), an epigenetic mark of active chromatin associated with increased transcriptional initiation (PubMed:37731000). Specifically binds histone H4 acetyl-methylated at 'Lys-5' and 'Lys-12' (H4K5acme and H4K12acme, respectively) (PubMed:37731000).</text>
</comment>
<comment type="activity regulation">
    <text evidence="14 17 18">Inhibited by JQ1, a thieno-triazolo-1,4-diazepine derivative, which specifically inhibits members of the BET family (BRD2, BRD3 and BRD4) (PubMed:20871596). The first bromo domain is inhibited by GSK778 (iBET-BD1), which specifically inhibits the first bromo domain of members of the BET family (BRD2, BRD3 and BRD4) (PubMed:32193360). The second bromo domain is inhibited by ABBV-744, which specifically inhibits the second bromo domain of members of the BET family (BRD2, BRD3 and BRD4) (PubMed:31969702). The second bromo domain is inhibited by GSK046 (iBET-BD2), which specifically inhibits the second bromo domain of members of the BET family (BRD2, BRD3 and BRD4) (PubMed:32193360).</text>
</comment>
<comment type="subunit">
    <text evidence="1 8 10 12 13 16">Homodimer (PubMed:17148447, PubMed:17848202, PubMed:20048151, PubMed:20709061). Interacts with E2F1 (PubMed:17148447). Interacts with (acetylated) STAT3; promoting STAT3 recruitment to chromatin (PubMed:28262505). Interacts with CTCF; promoting BRD2 recruitment to chromatin (By similarity).</text>
</comment>
<comment type="subunit">
    <text evidence="7">(Microbial infection) Interacts with herpes virus 8 protein LANA1.</text>
</comment>
<comment type="interaction">
    <interactant intactId="EBI-2874802">
        <id>P25440</id>
    </interactant>
    <interactant intactId="EBI-302023">
        <id>P62805</id>
        <label>H4C9</label>
    </interactant>
    <organismsDiffer>false</organismsDiffer>
    <experiments>5</experiments>
</comment>
<comment type="interaction">
    <interactant intactId="EBI-2874802">
        <id>P25440</id>
    </interactant>
    <interactant intactId="EBI-925990">
        <id>Q13761</id>
        <label>RUNX3</label>
    </interactant>
    <organismsDiffer>false</organismsDiffer>
    <experiments>8</experiments>
</comment>
<comment type="subcellular location">
    <subcellularLocation>
        <location evidence="11 15">Nucleus</location>
    </subcellularLocation>
    <subcellularLocation>
        <location evidence="11 15 16">Chromosome</location>
    </subcellularLocation>
    <text evidence="11">Detected on chromatin and nucleosomes.</text>
</comment>
<comment type="alternative products">
    <event type="alternative splicing"/>
    <isoform>
        <id>P25440-1</id>
        <name>1</name>
        <sequence type="displayed"/>
    </isoform>
    <isoform>
        <id>P25440-2</id>
        <name>2</name>
        <sequence type="described" ref="VSP_022600"/>
    </isoform>
    <isoform>
        <id>P25440-3</id>
        <name>3</name>
        <sequence type="described" ref="VSP_055029"/>
    </isoform>
    <isoform>
        <id>P25440-4</id>
        <name>4</name>
        <sequence type="described" ref="VSP_055028"/>
    </isoform>
</comment>
<comment type="domain">
    <text evidence="12 13 20">The first bromo domain specifically recognizes histone H4 acetylated at 'Lys-12' (H4K12ac) (PubMed:20048151). It also specifically binds histone H4 acetyl-methylated at 'Lys-5' and 'Lys-12' (H4K5acme and H4K12acme, respectively) (PubMed:37731000). The second bromo domain recognizes and binds histone H4 acetylated at 'Lys-5' and 'Lys-12' (H4K5ac and H4K12ac, respectively) (PubMed:20709061).</text>
</comment>
<comment type="miscellaneous">
    <text evidence="17 18">Some specific inhibitors of BRD2 that prevent binding to acetylated histone are promising therapeutic molecules for the treatment of cancers or inflammatory diseases (PubMed:31969702, PubMed:32193360). ABBV-744, a small molecule, has been tested on tumors with success: ABBV-744 antiproliferative activity is mainly restricted to cell lines of acute myeloid leukaemia and prostate cancer and is able to displace BRD4 from chromatin (PubMed:31969702). GSK046 (iBET-BD2), which specifically inhibits the second bromo domain, is a promising therapeutic small molecule for the treatment of inflammatory and autoimmune diseases (PubMed:32193360).</text>
</comment>
<comment type="similarity">
    <text evidence="26">Belongs to the BET family.</text>
</comment>
<comment type="sequence caution" evidence="26">
    <conflict type="erroneous initiation">
        <sequence resource="EMBL-CDS" id="AAA68890"/>
    </conflict>
    <text>Truncated N-terminus.</text>
</comment>
<gene>
    <name evidence="22 27" type="primary">BRD2</name>
    <name evidence="25" type="synonym">KIAA9001</name>
    <name evidence="24" type="synonym">RING3</name>
</gene>
<proteinExistence type="evidence at protein level"/>
<sequence length="801" mass="88061">MLQNVTPHNKLPGEGNAGLLGLGPEAAAPGKRIRKPSLLYEGFESPTMASVPALQLTPANPPPPEVSNPKKPGRVTNQLQYLHKVVMKALWKHQFAWPFRQPVDAVKLGLPDYHKIIKQPMDMGTIKRRLENNYYWAASECMQDFNTMFTNCYIYNKPTDDIVLMAQTLEKIFLQKVASMPQEEQELVVTIPKNSHKKGAKLAALQGSVTSAHQVPAVSSVSHTALYTPPPEIPTTVLNIPHPSVISSPLLKSLHSAGPPLLAVTAAPPAQPLAKKKGVKRKADTTTPTPTAILAPGSPASPPGSLEPKAARLPPMRRESGRPIKPPRKDLPDSQQQHQSSKKGKLSEQLKHCNGILKELLSKKHAAYAWPFYKPVDASALGLHDYHDIIKHPMDLSTVKRKMENRDYRDAQEFAADVRLMFSNCYKYNPPDHDVVAMARKLQDVFEFRYAKMPDEPLEPGPLPVSTAMPPGLAKSSSESSSEESSSESSSEEEEEEDEEDEEEEESESSDSEEERAHRLAELQEQLRAVHEQLAALSQGPISKPKRKREKKEKKKKRKAEKHRGRAGADEDDKGPRAPRPPQPKKSKKASGSGGGSAALGPSGFGPSGGSGTKLPKKATKTAPPALPTGYDSEEEEESRPMSYDEKRQLSLDINKLPGEKLGRVVHIIQAREPSLRDSNPEEIEIDFETLKPSTLRELERYVLSCLRKKPRKPYTIKKPVGKTKEELALEKKRELEKRLQDVSGQLNSTKKPPKKANEKTESSSAQQVAVSRLSASSSSSDSSSSSSSSSSSDTSDSDSG</sequence>
<accession>P25440</accession>
<accession>A2AAU0</accession>
<accession>B0S7P0</accession>
<accession>B1AZT1</accession>
<accession>O00699</accession>
<accession>O00700</accession>
<accession>Q15310</accession>
<accession>Q5STC9</accession>
<accession>Q63HQ9</accession>
<accession>Q658Y7</accession>
<accession>Q6P3U2</accession>
<accession>Q969U4</accession>
<protein>
    <recommendedName>
        <fullName evidence="26">Bromodomain-containing protein 2</fullName>
    </recommendedName>
    <alternativeName>
        <fullName>O27.1.1</fullName>
    </alternativeName>
</protein>
<reference key="1">
    <citation type="journal article" date="1992" name="DNA Seq.">
        <title>A homologue of the Drosophila female sterile homeotic (fsh) gene in the class II region of the human MHC.</title>
        <authorList>
            <person name="Beck S."/>
            <person name="Hanson I."/>
            <person name="Kelly A."/>
            <person name="Pappin D.J.C."/>
            <person name="Trowsdale J."/>
        </authorList>
    </citation>
    <scope>NUCLEOTIDE SEQUENCE [MRNA] (ISOFORM 1)</scope>
    <source>
        <tissue>T-cell</tissue>
    </source>
</reference>
<reference key="2">
    <citation type="journal article" date="1996" name="Immunogenetics">
        <title>Phylogeny and structure of the RING3 gene.</title>
        <authorList>
            <person name="Thorpe K.L."/>
            <person name="Abdulla S."/>
            <person name="Kaufman J."/>
            <person name="Trowsdale J."/>
            <person name="Beck S."/>
        </authorList>
    </citation>
    <scope>NUCLEOTIDE SEQUENCE [GENOMIC DNA]</scope>
    <scope>SEQUENCE REVISION TO N-TERMINUS</scope>
</reference>
<reference key="3">
    <citation type="submission" date="1997-07" db="EMBL/GenBank/DDBJ databases">
        <authorList>
            <person name="Nomura N."/>
            <person name="Miyajima N."/>
            <person name="Sazuka T."/>
            <person name="Tanaka A."/>
            <person name="Kawarabayasi Y."/>
            <person name="Sato S."/>
            <person name="Nagase T."/>
            <person name="Seki T."/>
            <person name="Ishikawa K."/>
            <person name="Tabata S."/>
        </authorList>
    </citation>
    <scope>NUCLEOTIDE SEQUENCE [LARGE SCALE MRNA] (ISOFORM 1)</scope>
    <source>
        <tissue>Bone marrow</tissue>
    </source>
</reference>
<reference key="4">
    <citation type="journal article" date="2007" name="BMC Genomics">
        <title>The full-ORF clone resource of the German cDNA consortium.</title>
        <authorList>
            <person name="Bechtel S."/>
            <person name="Rosenfelder H."/>
            <person name="Duda A."/>
            <person name="Schmidt C.P."/>
            <person name="Ernst U."/>
            <person name="Wellenreuther R."/>
            <person name="Mehrle A."/>
            <person name="Schuster C."/>
            <person name="Bahr A."/>
            <person name="Bloecker H."/>
            <person name="Heubner D."/>
            <person name="Hoerlein A."/>
            <person name="Michel G."/>
            <person name="Wedler H."/>
            <person name="Koehrer K."/>
            <person name="Ottenwaelder B."/>
            <person name="Poustka A."/>
            <person name="Wiemann S."/>
            <person name="Schupp I."/>
        </authorList>
    </citation>
    <scope>NUCLEOTIDE SEQUENCE [LARGE SCALE MRNA] (ISOFORMS 1; 3 AND 4)</scope>
    <source>
        <tissue>Bone marrow</tissue>
        <tissue>Testis</tissue>
    </source>
</reference>
<reference key="5">
    <citation type="journal article" date="2003" name="Nature">
        <title>The DNA sequence and analysis of human chromosome 6.</title>
        <authorList>
            <person name="Mungall A.J."/>
            <person name="Palmer S.A."/>
            <person name="Sims S.K."/>
            <person name="Edwards C.A."/>
            <person name="Ashurst J.L."/>
            <person name="Wilming L."/>
            <person name="Jones M.C."/>
            <person name="Horton R."/>
            <person name="Hunt S.E."/>
            <person name="Scott C.E."/>
            <person name="Gilbert J.G.R."/>
            <person name="Clamp M.E."/>
            <person name="Bethel G."/>
            <person name="Milne S."/>
            <person name="Ainscough R."/>
            <person name="Almeida J.P."/>
            <person name="Ambrose K.D."/>
            <person name="Andrews T.D."/>
            <person name="Ashwell R.I.S."/>
            <person name="Babbage A.K."/>
            <person name="Bagguley C.L."/>
            <person name="Bailey J."/>
            <person name="Banerjee R."/>
            <person name="Barker D.J."/>
            <person name="Barlow K.F."/>
            <person name="Bates K."/>
            <person name="Beare D.M."/>
            <person name="Beasley H."/>
            <person name="Beasley O."/>
            <person name="Bird C.P."/>
            <person name="Blakey S.E."/>
            <person name="Bray-Allen S."/>
            <person name="Brook J."/>
            <person name="Brown A.J."/>
            <person name="Brown J.Y."/>
            <person name="Burford D.C."/>
            <person name="Burrill W."/>
            <person name="Burton J."/>
            <person name="Carder C."/>
            <person name="Carter N.P."/>
            <person name="Chapman J.C."/>
            <person name="Clark S.Y."/>
            <person name="Clark G."/>
            <person name="Clee C.M."/>
            <person name="Clegg S."/>
            <person name="Cobley V."/>
            <person name="Collier R.E."/>
            <person name="Collins J.E."/>
            <person name="Colman L.K."/>
            <person name="Corby N.R."/>
            <person name="Coville G.J."/>
            <person name="Culley K.M."/>
            <person name="Dhami P."/>
            <person name="Davies J."/>
            <person name="Dunn M."/>
            <person name="Earthrowl M.E."/>
            <person name="Ellington A.E."/>
            <person name="Evans K.A."/>
            <person name="Faulkner L."/>
            <person name="Francis M.D."/>
            <person name="Frankish A."/>
            <person name="Frankland J."/>
            <person name="French L."/>
            <person name="Garner P."/>
            <person name="Garnett J."/>
            <person name="Ghori M.J."/>
            <person name="Gilby L.M."/>
            <person name="Gillson C.J."/>
            <person name="Glithero R.J."/>
            <person name="Grafham D.V."/>
            <person name="Grant M."/>
            <person name="Gribble S."/>
            <person name="Griffiths C."/>
            <person name="Griffiths M.N.D."/>
            <person name="Hall R."/>
            <person name="Halls K.S."/>
            <person name="Hammond S."/>
            <person name="Harley J.L."/>
            <person name="Hart E.A."/>
            <person name="Heath P.D."/>
            <person name="Heathcott R."/>
            <person name="Holmes S.J."/>
            <person name="Howden P.J."/>
            <person name="Howe K.L."/>
            <person name="Howell G.R."/>
            <person name="Huckle E."/>
            <person name="Humphray S.J."/>
            <person name="Humphries M.D."/>
            <person name="Hunt A.R."/>
            <person name="Johnson C.M."/>
            <person name="Joy A.A."/>
            <person name="Kay M."/>
            <person name="Keenan S.J."/>
            <person name="Kimberley A.M."/>
            <person name="King A."/>
            <person name="Laird G.K."/>
            <person name="Langford C."/>
            <person name="Lawlor S."/>
            <person name="Leongamornlert D.A."/>
            <person name="Leversha M."/>
            <person name="Lloyd C.R."/>
            <person name="Lloyd D.M."/>
            <person name="Loveland J.E."/>
            <person name="Lovell J."/>
            <person name="Martin S."/>
            <person name="Mashreghi-Mohammadi M."/>
            <person name="Maslen G.L."/>
            <person name="Matthews L."/>
            <person name="McCann O.T."/>
            <person name="McLaren S.J."/>
            <person name="McLay K."/>
            <person name="McMurray A."/>
            <person name="Moore M.J.F."/>
            <person name="Mullikin J.C."/>
            <person name="Niblett D."/>
            <person name="Nickerson T."/>
            <person name="Novik K.L."/>
            <person name="Oliver K."/>
            <person name="Overton-Larty E.K."/>
            <person name="Parker A."/>
            <person name="Patel R."/>
            <person name="Pearce A.V."/>
            <person name="Peck A.I."/>
            <person name="Phillimore B.J.C.T."/>
            <person name="Phillips S."/>
            <person name="Plumb R.W."/>
            <person name="Porter K.M."/>
            <person name="Ramsey Y."/>
            <person name="Ranby S.A."/>
            <person name="Rice C.M."/>
            <person name="Ross M.T."/>
            <person name="Searle S.M."/>
            <person name="Sehra H.K."/>
            <person name="Sheridan E."/>
            <person name="Skuce C.D."/>
            <person name="Smith S."/>
            <person name="Smith M."/>
            <person name="Spraggon L."/>
            <person name="Squares S.L."/>
            <person name="Steward C.A."/>
            <person name="Sycamore N."/>
            <person name="Tamlyn-Hall G."/>
            <person name="Tester J."/>
            <person name="Theaker A.J."/>
            <person name="Thomas D.W."/>
            <person name="Thorpe A."/>
            <person name="Tracey A."/>
            <person name="Tromans A."/>
            <person name="Tubby B."/>
            <person name="Wall M."/>
            <person name="Wallis J.M."/>
            <person name="West A.P."/>
            <person name="White S.S."/>
            <person name="Whitehead S.L."/>
            <person name="Whittaker H."/>
            <person name="Wild A."/>
            <person name="Willey D.J."/>
            <person name="Wilmer T.E."/>
            <person name="Wood J.M."/>
            <person name="Wray P.W."/>
            <person name="Wyatt J.C."/>
            <person name="Young L."/>
            <person name="Younger R.M."/>
            <person name="Bentley D.R."/>
            <person name="Coulson A."/>
            <person name="Durbin R.M."/>
            <person name="Hubbard T."/>
            <person name="Sulston J.E."/>
            <person name="Dunham I."/>
            <person name="Rogers J."/>
            <person name="Beck S."/>
        </authorList>
    </citation>
    <scope>NUCLEOTIDE SEQUENCE [LARGE SCALE GENOMIC DNA]</scope>
    <scope>VARIANT PHE-238</scope>
</reference>
<reference key="6">
    <citation type="submission" date="2005-07" db="EMBL/GenBank/DDBJ databases">
        <authorList>
            <person name="Mural R.J."/>
            <person name="Istrail S."/>
            <person name="Sutton G.G."/>
            <person name="Florea L."/>
            <person name="Halpern A.L."/>
            <person name="Mobarry C.M."/>
            <person name="Lippert R."/>
            <person name="Walenz B."/>
            <person name="Shatkay H."/>
            <person name="Dew I."/>
            <person name="Miller J.R."/>
            <person name="Flanigan M.J."/>
            <person name="Edwards N.J."/>
            <person name="Bolanos R."/>
            <person name="Fasulo D."/>
            <person name="Halldorsson B.V."/>
            <person name="Hannenhalli S."/>
            <person name="Turner R."/>
            <person name="Yooseph S."/>
            <person name="Lu F."/>
            <person name="Nusskern D.R."/>
            <person name="Shue B.C."/>
            <person name="Zheng X.H."/>
            <person name="Zhong F."/>
            <person name="Delcher A.L."/>
            <person name="Huson D.H."/>
            <person name="Kravitz S.A."/>
            <person name="Mouchard L."/>
            <person name="Reinert K."/>
            <person name="Remington K.A."/>
            <person name="Clark A.G."/>
            <person name="Waterman M.S."/>
            <person name="Eichler E.E."/>
            <person name="Adams M.D."/>
            <person name="Hunkapiller M.W."/>
            <person name="Myers E.W."/>
            <person name="Venter J.C."/>
        </authorList>
    </citation>
    <scope>NUCLEOTIDE SEQUENCE [LARGE SCALE GENOMIC DNA]</scope>
</reference>
<reference key="7">
    <citation type="journal article" date="2004" name="Genome Res.">
        <title>The status, quality, and expansion of the NIH full-length cDNA project: the Mammalian Gene Collection (MGC).</title>
        <authorList>
            <consortium name="The MGC Project Team"/>
        </authorList>
    </citation>
    <scope>NUCLEOTIDE SEQUENCE [LARGE SCALE MRNA] (ISOFORM 2)</scope>
    <source>
        <tissue>PNS</tissue>
    </source>
</reference>
<reference key="8">
    <citation type="journal article" date="2005" name="J. Virol.">
        <title>Brd2/RING3 interacts with a chromatin-binding domain in the Kaposi's Sarcoma-associated herpesvirus latency-associated nuclear antigen 1 (LANA-1) that is required for multiple functions of LANA-1.</title>
        <authorList>
            <person name="Viejo-Borbolla A."/>
            <person name="Ottinger M."/>
            <person name="Bruening E."/>
            <person name="Buerger A."/>
            <person name="Koenig R."/>
            <person name="Kati E."/>
            <person name="Sheldon J.A."/>
            <person name="Schulz T.F."/>
        </authorList>
    </citation>
    <scope>INTERACTION WITH HERPES VIRUS 8 PROTEIN LANA1 (MICROBIAL INFECTION)</scope>
</reference>
<reference key="9">
    <citation type="journal article" date="2008" name="Mol. Cell">
        <title>The double bromodomain proteins Brd2 and Brd3 couple histone acetylation to transcription.</title>
        <authorList>
            <person name="LeRoy G."/>
            <person name="Rickards B."/>
            <person name="Flint S.J."/>
        </authorList>
    </citation>
    <scope>FUNCTION</scope>
    <scope>INTERACTION WITH ACETYLATED CHROMATIN</scope>
    <scope>SUBCELLULAR LOCATION</scope>
</reference>
<reference key="10">
    <citation type="journal article" date="2008" name="Proc. Natl. Acad. Sci. U.S.A.">
        <title>A quantitative atlas of mitotic phosphorylation.</title>
        <authorList>
            <person name="Dephoure N."/>
            <person name="Zhou C."/>
            <person name="Villen J."/>
            <person name="Beausoleil S.A."/>
            <person name="Bakalarski C.E."/>
            <person name="Elledge S.J."/>
            <person name="Gygi S.P."/>
        </authorList>
    </citation>
    <scope>PHOSPHORYLATION [LARGE SCALE ANALYSIS] AT SER-298; SER-301; SER-305 AND SER-633</scope>
    <scope>IDENTIFICATION BY MASS SPECTROMETRY [LARGE SCALE ANALYSIS]</scope>
    <source>
        <tissue>Cervix carcinoma</tissue>
    </source>
</reference>
<reference key="11">
    <citation type="journal article" date="2009" name="Anal. Chem.">
        <title>Lys-N and trypsin cover complementary parts of the phosphoproteome in a refined SCX-based approach.</title>
        <authorList>
            <person name="Gauci S."/>
            <person name="Helbig A.O."/>
            <person name="Slijper M."/>
            <person name="Krijgsveld J."/>
            <person name="Heck A.J."/>
            <person name="Mohammed S."/>
        </authorList>
    </citation>
    <scope>ACETYLATION [LARGE SCALE ANALYSIS] AT MET-1</scope>
    <scope>IDENTIFICATION BY MASS SPECTROMETRY [LARGE SCALE ANALYSIS]</scope>
</reference>
<reference key="12">
    <citation type="journal article" date="2009" name="Sci. Signal.">
        <title>Quantitative phosphoproteomic analysis of T cell receptor signaling reveals system-wide modulation of protein-protein interactions.</title>
        <authorList>
            <person name="Mayya V."/>
            <person name="Lundgren D.H."/>
            <person name="Hwang S.-I."/>
            <person name="Rezaul K."/>
            <person name="Wu L."/>
            <person name="Eng J.K."/>
            <person name="Rodionov V."/>
            <person name="Han D.K."/>
        </authorList>
    </citation>
    <scope>PHOSPHORYLATION [LARGE SCALE ANALYSIS] AT SER-37; SER-298 AND SER-301</scope>
    <scope>IDENTIFICATION BY MASS SPECTROMETRY [LARGE SCALE ANALYSIS]</scope>
    <source>
        <tissue>Leukemic T-cell</tissue>
    </source>
</reference>
<reference key="13">
    <citation type="journal article" date="2010" name="Sci. Signal.">
        <title>Quantitative phosphoproteomics reveals widespread full phosphorylation site occupancy during mitosis.</title>
        <authorList>
            <person name="Olsen J.V."/>
            <person name="Vermeulen M."/>
            <person name="Santamaria A."/>
            <person name="Kumar C."/>
            <person name="Miller M.L."/>
            <person name="Jensen L.J."/>
            <person name="Gnad F."/>
            <person name="Cox J."/>
            <person name="Jensen T.S."/>
            <person name="Nigg E.A."/>
            <person name="Brunak S."/>
            <person name="Mann M."/>
        </authorList>
    </citation>
    <scope>ACETYLATION [LARGE SCALE ANALYSIS] AT MET-1</scope>
    <scope>PHOSPHORYLATION [LARGE SCALE ANALYSIS] AT THR-6; SER-298 AND SER-301</scope>
    <scope>IDENTIFICATION BY MASS SPECTROMETRY [LARGE SCALE ANALYSIS]</scope>
    <source>
        <tissue>Cervix carcinoma</tissue>
    </source>
</reference>
<reference key="14">
    <citation type="journal article" date="2011" name="BMC Syst. Biol.">
        <title>Initial characterization of the human central proteome.</title>
        <authorList>
            <person name="Burkard T.R."/>
            <person name="Planyavsky M."/>
            <person name="Kaupe I."/>
            <person name="Breitwieser F.P."/>
            <person name="Buerckstuemmer T."/>
            <person name="Bennett K.L."/>
            <person name="Superti-Furga G."/>
            <person name="Colinge J."/>
        </authorList>
    </citation>
    <scope>IDENTIFICATION BY MASS SPECTROMETRY [LARGE SCALE ANALYSIS]</scope>
</reference>
<reference key="15">
    <citation type="journal article" date="2011" name="Sci. Signal.">
        <title>System-wide temporal characterization of the proteome and phosphoproteome of human embryonic stem cell differentiation.</title>
        <authorList>
            <person name="Rigbolt K.T."/>
            <person name="Prokhorova T.A."/>
            <person name="Akimov V."/>
            <person name="Henningsen J."/>
            <person name="Johansen P.T."/>
            <person name="Kratchmarova I."/>
            <person name="Kassem M."/>
            <person name="Mann M."/>
            <person name="Olsen J.V."/>
            <person name="Blagoev B."/>
        </authorList>
    </citation>
    <scope>PHOSPHORYLATION [LARGE SCALE ANALYSIS] AT SER-298</scope>
    <scope>IDENTIFICATION BY MASS SPECTROMETRY [LARGE SCALE ANALYSIS]</scope>
</reference>
<reference key="16">
    <citation type="journal article" date="2013" name="J. Proteome Res.">
        <title>Toward a comprehensive characterization of a human cancer cell phosphoproteome.</title>
        <authorList>
            <person name="Zhou H."/>
            <person name="Di Palma S."/>
            <person name="Preisinger C."/>
            <person name="Peng M."/>
            <person name="Polat A.N."/>
            <person name="Heck A.J."/>
            <person name="Mohammed S."/>
        </authorList>
    </citation>
    <scope>PHOSPHORYLATION [LARGE SCALE ANALYSIS] AT SER-298 AND SER-633</scope>
    <scope>IDENTIFICATION BY MASS SPECTROMETRY [LARGE SCALE ANALYSIS]</scope>
    <source>
        <tissue>Cervix carcinoma</tissue>
    </source>
</reference>
<reference key="17">
    <citation type="journal article" date="2014" name="J. Proteomics">
        <title>An enzyme assisted RP-RPLC approach for in-depth analysis of human liver phosphoproteome.</title>
        <authorList>
            <person name="Bian Y."/>
            <person name="Song C."/>
            <person name="Cheng K."/>
            <person name="Dong M."/>
            <person name="Wang F."/>
            <person name="Huang J."/>
            <person name="Sun D."/>
            <person name="Wang L."/>
            <person name="Ye M."/>
            <person name="Zou H."/>
        </authorList>
    </citation>
    <scope>PHOSPHORYLATION [LARGE SCALE ANALYSIS] AT SER-298; SER-301 AND SER-305</scope>
    <scope>IDENTIFICATION BY MASS SPECTROMETRY [LARGE SCALE ANALYSIS]</scope>
    <source>
        <tissue>Liver</tissue>
    </source>
</reference>
<reference key="18">
    <citation type="journal article" date="2015" name="Genes Dev.">
        <title>Screen identifies bromodomain protein ZMYND8 in chromatin recognition of transcription-associated DNA damage that promotes homologous recombination.</title>
        <authorList>
            <person name="Gong F."/>
            <person name="Chiu L.Y."/>
            <person name="Cox B."/>
            <person name="Aymard F."/>
            <person name="Clouaire T."/>
            <person name="Leung J.W."/>
            <person name="Cammarata M."/>
            <person name="Perez M."/>
            <person name="Agarwal P."/>
            <person name="Brodbelt J.S."/>
            <person name="Legube G."/>
            <person name="Miller K.M."/>
        </authorList>
    </citation>
    <scope>SUBCELLULAR LOCATION</scope>
</reference>
<reference key="19">
    <citation type="journal article" date="2022" name="Nat. Genet.">
        <title>BRD2 compartmentalizes the accessible genome.</title>
        <authorList>
            <person name="Xie L."/>
            <person name="Dong P."/>
            <person name="Qi Y."/>
            <person name="Hsieh T.S."/>
            <person name="English B.P."/>
            <person name="Jung S."/>
            <person name="Chen X."/>
            <person name="De Marzio M."/>
            <person name="Casellas R."/>
            <person name="Chang H.Y."/>
            <person name="Zhang B."/>
            <person name="Tjian R."/>
            <person name="Liu Z."/>
        </authorList>
    </citation>
    <scope>FUNCTION</scope>
</reference>
<reference evidence="33" key="20">
    <citation type="journal article" date="2007" name="BMC Struct. Biol.">
        <title>Solution structure of the second bromodomain of Brd2 and its specific interaction with acetylated histone tails.</title>
        <authorList>
            <person name="Huang H."/>
            <person name="Zhang J."/>
            <person name="Shen W."/>
            <person name="Wang X."/>
            <person name="Wu J."/>
            <person name="Wu J."/>
            <person name="Shi Y."/>
        </authorList>
    </citation>
    <scope>STRUCTURE BY NMR OF 348-455</scope>
    <scope>FUNCTION</scope>
    <scope>SUBUNIT</scope>
    <scope>MUTAGENESIS OF VAL-376; LEU-381; LEU-383 AND ASN-429</scope>
</reference>
<reference key="21">
    <citation type="journal article" date="2007" name="J. Biol. Chem.">
        <title>Crystal structure of the human BRD2 bromodomain: insights into dimerization and recognition of acetylated histone h4.</title>
        <authorList>
            <person name="Nakamura Y."/>
            <person name="Umehara T."/>
            <person name="Nakano K."/>
            <person name="Jang M.K."/>
            <person name="Shirouzu M."/>
            <person name="Morita S."/>
            <person name="Uda-Tochio H."/>
            <person name="Hamana H."/>
            <person name="Terada T."/>
            <person name="Adachi N."/>
            <person name="Matsumoto T."/>
            <person name="Tanaka A."/>
            <person name="Horikoshi M."/>
            <person name="Ozato K."/>
            <person name="Padmanabhan B."/>
            <person name="Yokoyama S."/>
        </authorList>
    </citation>
    <scope>X-RAY CRYSTALLOGRAPHY (1.8 ANGSTROMS) OF 73-194</scope>
    <scope>FUNCTION</scope>
    <scope>HOMODIMERIZATION</scope>
    <scope>INTERACTION WITH E2F1 AND HISTONE H4</scope>
    <scope>MUTAGENESIS OF GLN-78; 142-MET-GLN-143; TYR-153; ILE-154; GLU-170; LEU-174; VAL-177 AND GLN-182</scope>
</reference>
<reference evidence="32" key="22">
    <citation type="journal article" date="2010" name="FEBS Lett.">
        <title>Structural implications for K5/K12-di-acetylated histone H4 recognition by the second bromodomain of BRD2.</title>
        <authorList>
            <person name="Umehara T."/>
            <person name="Nakamura Y."/>
            <person name="Wakamori M."/>
            <person name="Ozato K."/>
            <person name="Yokoyama S."/>
            <person name="Padmanabhan B."/>
        </authorList>
    </citation>
    <scope>X-RAY CRYSTALLOGRAPHY (2.30 ANGSTROMS) OF 348-455</scope>
    <scope>FUNCTION</scope>
    <scope>HOMODIMERIZATION</scope>
    <scope>DOMAIN</scope>
    <scope>MUTAGENESIS OF 111-PRO-ASP-112; 112-ASP--ILE-116; TYR-113; ILE-154; 156-ASN--ASP-160; ASN-156; 157-LYS--ASP-160; PRO-158 AND ASP-160</scope>
</reference>
<reference evidence="28 29 30 31" key="23">
    <citation type="journal article" date="2010" name="J. Biol. Chem.">
        <title>Structural basis for acetylated histone H4 recognition by the human BRD2 bromodomain.</title>
        <authorList>
            <person name="Umehara T."/>
            <person name="Nakamura Y."/>
            <person name="Jang M.K."/>
            <person name="Nakano K."/>
            <person name="Tanaka A."/>
            <person name="Ozato K."/>
            <person name="Padmanabhan B."/>
            <person name="Yokoyama S."/>
        </authorList>
    </citation>
    <scope>X-RAY CRYSTALLOGRAPHY (1.80 ANGSTROMS) OF 73-194</scope>
    <scope>FUNCTION</scope>
    <scope>HOMODIMERIZATION</scope>
    <scope>DOMAIN</scope>
</reference>
<reference key="24">
    <citation type="journal article" date="2010" name="Nature">
        <title>Selective inhibition of BET bromodomains.</title>
        <authorList>
            <person name="Filippakopoulos P."/>
            <person name="Qi J."/>
            <person name="Picaud S."/>
            <person name="Shen Y."/>
            <person name="Smith W.B."/>
            <person name="Fedorov O."/>
            <person name="Morse E.M."/>
            <person name="Keates T."/>
            <person name="Hickman T.T."/>
            <person name="Felletar I."/>
            <person name="Philpott M."/>
            <person name="Munro S."/>
            <person name="McKeown M.R."/>
            <person name="Wang Y."/>
            <person name="Christie A.L."/>
            <person name="West N."/>
            <person name="Cameron M.J."/>
            <person name="Schwartz B."/>
            <person name="Heightman T.D."/>
            <person name="La Thangue N."/>
            <person name="French C.A."/>
            <person name="Wiest O."/>
            <person name="Kung A.L."/>
            <person name="Knapp S."/>
            <person name="Bradner J.E."/>
        </authorList>
    </citation>
    <scope>X-RAY CRYSTALLOGRAPHY (1.61 ANGSTROMS) OF 344-452</scope>
    <scope>FUNCTION</scope>
    <scope>ACTIVITY REGULATION</scope>
</reference>
<reference evidence="34" key="25">
    <citation type="journal article" date="2017" name="Mol. Cell">
        <title>Distinct roles of Brd2 and Brd4 in potentiating the transcriptional program for th17 cell differentiation.</title>
        <authorList>
            <person name="Cheung K.L."/>
            <person name="Zhang F."/>
            <person name="Jaganathan A."/>
            <person name="Sharma R."/>
            <person name="Zhang Q."/>
            <person name="Konuma T."/>
            <person name="Shen T."/>
            <person name="Lee J.Y."/>
            <person name="Ren C."/>
            <person name="Chen C.H."/>
            <person name="Lu G."/>
            <person name="Olson M.R."/>
            <person name="Zhang W."/>
            <person name="Kaplan M.H."/>
            <person name="Littman D.R."/>
            <person name="Walsh M.J."/>
            <person name="Xiong H."/>
            <person name="Zeng L."/>
            <person name="Zhou M.M."/>
        </authorList>
    </citation>
    <scope>STRUCTURE BY NMR OF 344-455 IN COMPLEX WITH STAT3</scope>
    <scope>FUNCTION</scope>
    <scope>SUBCELLULAR LOCATION</scope>
    <scope>INTERACTION WITH STAT3</scope>
</reference>
<reference evidence="35 36" key="26">
    <citation type="journal article" date="2020" name="Nature">
        <title>Selective inhibition of the BD2 bromodomain of BET proteins in prostate cancer.</title>
        <authorList>
            <person name="Faivre E.J."/>
            <person name="McDaniel K.F."/>
            <person name="Albert D.H."/>
            <person name="Mantena S.R."/>
            <person name="Plotnik J.P."/>
            <person name="Wilcox D."/>
            <person name="Zhang L."/>
            <person name="Bui M.H."/>
            <person name="Sheppard G.S."/>
            <person name="Wang L."/>
            <person name="Sehgal V."/>
            <person name="Lin X."/>
            <person name="Huang X."/>
            <person name="Lu X."/>
            <person name="Uziel T."/>
            <person name="Hessler P."/>
            <person name="Lam L.T."/>
            <person name="Bellin R.J."/>
            <person name="Mehta G."/>
            <person name="Fidanze S."/>
            <person name="Pratt J.K."/>
            <person name="Liu D."/>
            <person name="Hasvold L.A."/>
            <person name="Sun C."/>
            <person name="Panchal S.C."/>
            <person name="Nicolette J.J."/>
            <person name="Fossey S.L."/>
            <person name="Park C.H."/>
            <person name="Longenecker K."/>
            <person name="Bigelow L."/>
            <person name="Torrent M."/>
            <person name="Rosenberg S.H."/>
            <person name="Kati W.M."/>
            <person name="Shen Y."/>
        </authorList>
    </citation>
    <scope>X-RAY CRYSTALLOGRAPHY (1.98 ANGSTROMS) OF 73-194 IN COMPLEX WITH ABBV-744 INHIBITOR</scope>
    <scope>FUNCTION</scope>
    <scope>ACTIVITY REGULATION</scope>
</reference>
<reference evidence="37 38" key="27">
    <citation type="journal article" date="2020" name="Science">
        <title>Selective targeting of BD1 and BD2 of the BET proteins in cancer and immunoinflammation.</title>
        <authorList>
            <person name="Gilan O."/>
            <person name="Rioja I."/>
            <person name="Knezevic K."/>
            <person name="Bell M.J."/>
            <person name="Yeung M.M."/>
            <person name="Harker N.R."/>
            <person name="Lam E.Y.N."/>
            <person name="Chung C.W."/>
            <person name="Bamborough P."/>
            <person name="Petretich M."/>
            <person name="Urh M."/>
            <person name="Atkinson S.J."/>
            <person name="Bassil A.K."/>
            <person name="Roberts E.J."/>
            <person name="Vassiliadis D."/>
            <person name="Burr M.L."/>
            <person name="Preston A.G.S."/>
            <person name="Wellaway C."/>
            <person name="Werner T."/>
            <person name="Gray J.R."/>
            <person name="Michon A.M."/>
            <person name="Gobbetti T."/>
            <person name="Kumar V."/>
            <person name="Soden P.E."/>
            <person name="Haynes A."/>
            <person name="Vappiani J."/>
            <person name="Tough D.F."/>
            <person name="Taylor S."/>
            <person name="Dawson S.J."/>
            <person name="Bantscheff M."/>
            <person name="Lindon M."/>
            <person name="Drewes G."/>
            <person name="Demont E.H."/>
            <person name="Daniels D.L."/>
            <person name="Grandi P."/>
            <person name="Prinjha R.K."/>
            <person name="Dawson M.A."/>
        </authorList>
    </citation>
    <scope>X-RAY CRYSTALLOGRAPHY (1.60 ANGSTROMS) OF 344-455 IN COMPLEX WITH GSK778 AND GSK046</scope>
    <scope>ACTIVITY REGULATION</scope>
</reference>
<reference evidence="39" key="28">
    <citation type="journal article" date="2023" name="Nature">
        <title>Acetyl-methyllysine marks chromatin at active transcription start sites.</title>
        <authorList>
            <person name="Lu-Culligan W.J."/>
            <person name="Connor L.J."/>
            <person name="Xie Y."/>
            <person name="Ekundayo B.E."/>
            <person name="Rose B.T."/>
            <person name="Machyna M."/>
            <person name="Pintado-Urbanc A.P."/>
            <person name="Zimmer J.T."/>
            <person name="Vock I.W."/>
            <person name="Bhanu N.V."/>
            <person name="King M.C."/>
            <person name="Garcia B.A."/>
            <person name="Bleichert F."/>
            <person name="Simon M.D."/>
        </authorList>
    </citation>
    <scope>X-RAY CRYSTALLOGRAPHY (1.8 ANGSTROMS) OF 86-206 IN COMPLEX WITH N6-ACETYL-N6-METHYLLYSINE</scope>
    <scope>FUNCTION</scope>
    <scope>MUTAGENESIS OF ASN-156</scope>
</reference>
<reference key="29">
    <citation type="journal article" date="2007" name="Nature">
        <title>Patterns of somatic mutation in human cancer genomes.</title>
        <authorList>
            <person name="Greenman C."/>
            <person name="Stephens P."/>
            <person name="Smith R."/>
            <person name="Dalgliesh G.L."/>
            <person name="Hunter C."/>
            <person name="Bignell G."/>
            <person name="Davies H."/>
            <person name="Teague J."/>
            <person name="Butler A."/>
            <person name="Stevens C."/>
            <person name="Edkins S."/>
            <person name="O'Meara S."/>
            <person name="Vastrik I."/>
            <person name="Schmidt E.E."/>
            <person name="Avis T."/>
            <person name="Barthorpe S."/>
            <person name="Bhamra G."/>
            <person name="Buck G."/>
            <person name="Choudhury B."/>
            <person name="Clements J."/>
            <person name="Cole J."/>
            <person name="Dicks E."/>
            <person name="Forbes S."/>
            <person name="Gray K."/>
            <person name="Halliday K."/>
            <person name="Harrison R."/>
            <person name="Hills K."/>
            <person name="Hinton J."/>
            <person name="Jenkinson A."/>
            <person name="Jones D."/>
            <person name="Menzies A."/>
            <person name="Mironenko T."/>
            <person name="Perry J."/>
            <person name="Raine K."/>
            <person name="Richardson D."/>
            <person name="Shepherd R."/>
            <person name="Small A."/>
            <person name="Tofts C."/>
            <person name="Varian J."/>
            <person name="Webb T."/>
            <person name="West S."/>
            <person name="Widaa S."/>
            <person name="Yates A."/>
            <person name="Cahill D.P."/>
            <person name="Louis D.N."/>
            <person name="Goldstraw P."/>
            <person name="Nicholson A.G."/>
            <person name="Brasseur F."/>
            <person name="Looijenga L."/>
            <person name="Weber B.L."/>
            <person name="Chiew Y.-E."/>
            <person name="DeFazio A."/>
            <person name="Greaves M.F."/>
            <person name="Green A.R."/>
            <person name="Campbell P."/>
            <person name="Birney E."/>
            <person name="Easton D.F."/>
            <person name="Chenevix-Trench G."/>
            <person name="Tan M.-H."/>
            <person name="Khoo S.K."/>
            <person name="Teh B.T."/>
            <person name="Yuen S.T."/>
            <person name="Leung S.Y."/>
            <person name="Wooster R."/>
            <person name="Futreal P.A."/>
            <person name="Stratton M.R."/>
        </authorList>
    </citation>
    <scope>VARIANTS [LARGE SCALE ANALYSIS] GLU-30; GLY-49; SER-49; PRO-212; PHE-238; GLN-260; VAL-474; GLY-558; THR-569; PRO-599 AND LEU-714</scope>
</reference>
<evidence type="ECO:0000250" key="1">
    <source>
        <dbReference type="UniProtKB" id="Q7JJ13"/>
    </source>
</evidence>
<evidence type="ECO:0000255" key="2"/>
<evidence type="ECO:0000255" key="3">
    <source>
        <dbReference type="PROSITE-ProRule" id="PRU00035"/>
    </source>
</evidence>
<evidence type="ECO:0000255" key="4">
    <source>
        <dbReference type="PROSITE-ProRule" id="PRU00857"/>
    </source>
</evidence>
<evidence type="ECO:0000256" key="5">
    <source>
        <dbReference type="SAM" id="MobiDB-lite"/>
    </source>
</evidence>
<evidence type="ECO:0000269" key="6">
    <source>
    </source>
</evidence>
<evidence type="ECO:0000269" key="7">
    <source>
    </source>
</evidence>
<evidence type="ECO:0000269" key="8">
    <source>
    </source>
</evidence>
<evidence type="ECO:0000269" key="9">
    <source>
    </source>
</evidence>
<evidence type="ECO:0000269" key="10">
    <source>
    </source>
</evidence>
<evidence type="ECO:0000269" key="11">
    <source>
    </source>
</evidence>
<evidence type="ECO:0000269" key="12">
    <source>
    </source>
</evidence>
<evidence type="ECO:0000269" key="13">
    <source>
    </source>
</evidence>
<evidence type="ECO:0000269" key="14">
    <source>
    </source>
</evidence>
<evidence type="ECO:0000269" key="15">
    <source>
    </source>
</evidence>
<evidence type="ECO:0000269" key="16">
    <source>
    </source>
</evidence>
<evidence type="ECO:0000269" key="17">
    <source>
    </source>
</evidence>
<evidence type="ECO:0000269" key="18">
    <source>
    </source>
</evidence>
<evidence type="ECO:0000269" key="19">
    <source>
    </source>
</evidence>
<evidence type="ECO:0000269" key="20">
    <source>
    </source>
</evidence>
<evidence type="ECO:0000303" key="21">
    <source>
    </source>
</evidence>
<evidence type="ECO:0000303" key="22">
    <source>
    </source>
</evidence>
<evidence type="ECO:0000303" key="23">
    <source>
    </source>
</evidence>
<evidence type="ECO:0000303" key="24">
    <source>
    </source>
</evidence>
<evidence type="ECO:0000303" key="25">
    <source ref="3"/>
</evidence>
<evidence type="ECO:0000305" key="26"/>
<evidence type="ECO:0000312" key="27">
    <source>
        <dbReference type="HGNC" id="HGNC:1103"/>
    </source>
</evidence>
<evidence type="ECO:0007744" key="28">
    <source>
        <dbReference type="PDB" id="1X0J"/>
    </source>
</evidence>
<evidence type="ECO:0007744" key="29">
    <source>
        <dbReference type="PDB" id="2DVQ"/>
    </source>
</evidence>
<evidence type="ECO:0007744" key="30">
    <source>
        <dbReference type="PDB" id="2DVR"/>
    </source>
</evidence>
<evidence type="ECO:0007744" key="31">
    <source>
        <dbReference type="PDB" id="2DVS"/>
    </source>
</evidence>
<evidence type="ECO:0007744" key="32">
    <source>
        <dbReference type="PDB" id="2E3K"/>
    </source>
</evidence>
<evidence type="ECO:0007744" key="33">
    <source>
        <dbReference type="PDB" id="2G4A"/>
    </source>
</evidence>
<evidence type="ECO:0007744" key="34">
    <source>
        <dbReference type="PDB" id="5U5S"/>
    </source>
</evidence>
<evidence type="ECO:0007744" key="35">
    <source>
        <dbReference type="PDB" id="6E6J"/>
    </source>
</evidence>
<evidence type="ECO:0007744" key="36">
    <source>
        <dbReference type="PDB" id="6ONY"/>
    </source>
</evidence>
<evidence type="ECO:0007744" key="37">
    <source>
        <dbReference type="PDB" id="6SWO"/>
    </source>
</evidence>
<evidence type="ECO:0007744" key="38">
    <source>
        <dbReference type="PDB" id="6SWP"/>
    </source>
</evidence>
<evidence type="ECO:0007744" key="39">
    <source>
        <dbReference type="PDB" id="8SB6"/>
    </source>
</evidence>
<evidence type="ECO:0007744" key="40">
    <source>
    </source>
</evidence>
<evidence type="ECO:0007744" key="41">
    <source>
    </source>
</evidence>
<evidence type="ECO:0007744" key="42">
    <source>
    </source>
</evidence>
<evidence type="ECO:0007744" key="43">
    <source>
    </source>
</evidence>
<evidence type="ECO:0007744" key="44">
    <source>
    </source>
</evidence>
<evidence type="ECO:0007744" key="45">
    <source>
    </source>
</evidence>
<evidence type="ECO:0007744" key="46">
    <source>
    </source>
</evidence>
<evidence type="ECO:0007829" key="47">
    <source>
        <dbReference type="PDB" id="2G4A"/>
    </source>
</evidence>
<evidence type="ECO:0007829" key="48">
    <source>
        <dbReference type="PDB" id="5HEL"/>
    </source>
</evidence>
<evidence type="ECO:0007829" key="49">
    <source>
        <dbReference type="PDB" id="5IG6"/>
    </source>
</evidence>
<evidence type="ECO:0007829" key="50">
    <source>
        <dbReference type="PDB" id="6CUI"/>
    </source>
</evidence>
<evidence type="ECO:0007829" key="51">
    <source>
        <dbReference type="PDB" id="6ULQ"/>
    </source>
</evidence>
<evidence type="ECO:0007829" key="52">
    <source>
        <dbReference type="PDB" id="7WNI"/>
    </source>
</evidence>
<dbReference type="EMBL" id="X62083">
    <property type="protein sequence ID" value="CAA43996.1"/>
    <property type="molecule type" value="mRNA"/>
</dbReference>
<dbReference type="EMBL" id="M80613">
    <property type="protein sequence ID" value="AAA68890.1"/>
    <property type="status" value="ALT_INIT"/>
    <property type="molecule type" value="mRNA"/>
</dbReference>
<dbReference type="EMBL" id="X96670">
    <property type="protein sequence ID" value="CAA65450.1"/>
    <property type="molecule type" value="Genomic_DNA"/>
</dbReference>
<dbReference type="EMBL" id="Z96104">
    <property type="protein sequence ID" value="CAC69989.1"/>
    <property type="molecule type" value="Genomic_DNA"/>
</dbReference>
<dbReference type="EMBL" id="D42040">
    <property type="protein sequence ID" value="BAA07641.1"/>
    <property type="molecule type" value="mRNA"/>
</dbReference>
<dbReference type="EMBL" id="BX647233">
    <property type="protein sequence ID" value="CAH56179.1"/>
    <property type="molecule type" value="mRNA"/>
</dbReference>
<dbReference type="EMBL" id="BX648109">
    <property type="protein sequence ID" value="CAH56171.1"/>
    <property type="molecule type" value="mRNA"/>
</dbReference>
<dbReference type="EMBL" id="AL832722">
    <property type="protein sequence ID" value="CAH56208.1"/>
    <property type="molecule type" value="mRNA"/>
</dbReference>
<dbReference type="EMBL" id="AL645941">
    <property type="status" value="NOT_ANNOTATED_CDS"/>
    <property type="molecule type" value="Genomic_DNA"/>
</dbReference>
<dbReference type="EMBL" id="AL662845">
    <property type="status" value="NOT_ANNOTATED_CDS"/>
    <property type="molecule type" value="Genomic_DNA"/>
</dbReference>
<dbReference type="EMBL" id="AL805913">
    <property type="status" value="NOT_ANNOTATED_CDS"/>
    <property type="molecule type" value="Genomic_DNA"/>
</dbReference>
<dbReference type="EMBL" id="BX005422">
    <property type="status" value="NOT_ANNOTATED_CDS"/>
    <property type="molecule type" value="Genomic_DNA"/>
</dbReference>
<dbReference type="EMBL" id="BX908719">
    <property type="status" value="NOT_ANNOTATED_CDS"/>
    <property type="molecule type" value="Genomic_DNA"/>
</dbReference>
<dbReference type="EMBL" id="CR936909">
    <property type="status" value="NOT_ANNOTATED_CDS"/>
    <property type="molecule type" value="Genomic_DNA"/>
</dbReference>
<dbReference type="EMBL" id="AL935042">
    <property type="status" value="NOT_ANNOTATED_CDS"/>
    <property type="molecule type" value="Genomic_DNA"/>
</dbReference>
<dbReference type="EMBL" id="CH471081">
    <property type="protein sequence ID" value="EAX03662.1"/>
    <property type="molecule type" value="Genomic_DNA"/>
</dbReference>
<dbReference type="EMBL" id="CH471081">
    <property type="protein sequence ID" value="EAX03663.1"/>
    <property type="molecule type" value="Genomic_DNA"/>
</dbReference>
<dbReference type="EMBL" id="BC063840">
    <property type="protein sequence ID" value="AAH63840.1"/>
    <property type="molecule type" value="mRNA"/>
</dbReference>
<dbReference type="CCDS" id="CCDS4762.1">
    <molecule id="P25440-1"/>
</dbReference>
<dbReference type="CCDS" id="CCDS56420.1">
    <molecule id="P25440-2"/>
</dbReference>
<dbReference type="PIR" id="A56619">
    <property type="entry name" value="A56619"/>
</dbReference>
<dbReference type="RefSeq" id="NP_001106653.1">
    <molecule id="P25440-1"/>
    <property type="nucleotide sequence ID" value="NM_001113182.3"/>
</dbReference>
<dbReference type="RefSeq" id="NP_001186384.1">
    <molecule id="P25440-2"/>
    <property type="nucleotide sequence ID" value="NM_001199455.1"/>
</dbReference>
<dbReference type="RefSeq" id="NP_001186385.1">
    <molecule id="P25440-3"/>
    <property type="nucleotide sequence ID" value="NM_001199456.2"/>
</dbReference>
<dbReference type="RefSeq" id="NP_001278915.1">
    <molecule id="P25440-4"/>
    <property type="nucleotide sequence ID" value="NM_001291986.2"/>
</dbReference>
<dbReference type="RefSeq" id="NP_005095.1">
    <molecule id="P25440-1"/>
    <property type="nucleotide sequence ID" value="NM_005104.4"/>
</dbReference>
<dbReference type="PDB" id="1X0J">
    <property type="method" value="X-ray"/>
    <property type="resolution" value="1.80 A"/>
    <property type="chains" value="A/B/C=73-194"/>
</dbReference>
<dbReference type="PDB" id="2DVQ">
    <property type="method" value="X-ray"/>
    <property type="resolution" value="2.04 A"/>
    <property type="chains" value="A/B/C=73-194"/>
</dbReference>
<dbReference type="PDB" id="2DVR">
    <property type="method" value="X-ray"/>
    <property type="resolution" value="2.30 A"/>
    <property type="chains" value="A/B/C=73-194"/>
</dbReference>
<dbReference type="PDB" id="2DVS">
    <property type="method" value="X-ray"/>
    <property type="resolution" value="2.04 A"/>
    <property type="chains" value="A/B/C=73-194"/>
</dbReference>
<dbReference type="PDB" id="2DVV">
    <property type="method" value="X-ray"/>
    <property type="resolution" value="1.80 A"/>
    <property type="chains" value="A=348-455"/>
</dbReference>
<dbReference type="PDB" id="2E3K">
    <property type="method" value="X-ray"/>
    <property type="resolution" value="2.30 A"/>
    <property type="chains" value="A/B/C/D=348-455"/>
</dbReference>
<dbReference type="PDB" id="2G4A">
    <property type="method" value="NMR"/>
    <property type="chains" value="A=348-455"/>
</dbReference>
<dbReference type="PDB" id="2YDW">
    <property type="method" value="X-ray"/>
    <property type="resolution" value="1.90 A"/>
    <property type="chains" value="A/B/C=67-200"/>
</dbReference>
<dbReference type="PDB" id="2YEK">
    <property type="method" value="X-ray"/>
    <property type="resolution" value="1.98 A"/>
    <property type="chains" value="A/B/C=67-200"/>
</dbReference>
<dbReference type="PDB" id="3AQA">
    <property type="method" value="X-ray"/>
    <property type="resolution" value="2.30 A"/>
    <property type="chains" value="A/B/C=73-194"/>
</dbReference>
<dbReference type="PDB" id="3ONI">
    <property type="method" value="X-ray"/>
    <property type="resolution" value="1.61 A"/>
    <property type="chains" value="A=344-455"/>
</dbReference>
<dbReference type="PDB" id="4A9E">
    <property type="method" value="X-ray"/>
    <property type="resolution" value="1.91 A"/>
    <property type="chains" value="A/B/C=67-200"/>
</dbReference>
<dbReference type="PDB" id="4A9F">
    <property type="method" value="X-ray"/>
    <property type="resolution" value="1.73 A"/>
    <property type="chains" value="A/B/C=67-200"/>
</dbReference>
<dbReference type="PDB" id="4A9H">
    <property type="method" value="X-ray"/>
    <property type="resolution" value="2.05 A"/>
    <property type="chains" value="A/B/C=67-200"/>
</dbReference>
<dbReference type="PDB" id="4A9I">
    <property type="method" value="X-ray"/>
    <property type="resolution" value="2.25 A"/>
    <property type="chains" value="A/B/C=67-200"/>
</dbReference>
<dbReference type="PDB" id="4A9J">
    <property type="method" value="X-ray"/>
    <property type="resolution" value="1.90 A"/>
    <property type="chains" value="A/B/C=67-200"/>
</dbReference>
<dbReference type="PDB" id="4A9M">
    <property type="method" value="X-ray"/>
    <property type="resolution" value="2.06 A"/>
    <property type="chains" value="A/B/C=67-200"/>
</dbReference>
<dbReference type="PDB" id="4A9N">
    <property type="method" value="X-ray"/>
    <property type="resolution" value="1.85 A"/>
    <property type="chains" value="A/B/C=67-200"/>
</dbReference>
<dbReference type="PDB" id="4A9O">
    <property type="method" value="X-ray"/>
    <property type="resolution" value="1.78 A"/>
    <property type="chains" value="A/B/C=67-200"/>
</dbReference>
<dbReference type="PDB" id="4AKN">
    <property type="method" value="X-ray"/>
    <property type="resolution" value="1.82 A"/>
    <property type="chains" value="A/B/C=67-200"/>
</dbReference>
<dbReference type="PDB" id="4ALG">
    <property type="method" value="X-ray"/>
    <property type="resolution" value="1.60 A"/>
    <property type="chains" value="A=67-200"/>
</dbReference>
<dbReference type="PDB" id="4ALH">
    <property type="method" value="X-ray"/>
    <property type="resolution" value="1.78 A"/>
    <property type="chains" value="A/B/C=67-200"/>
</dbReference>
<dbReference type="PDB" id="4J1P">
    <property type="method" value="X-ray"/>
    <property type="resolution" value="1.08 A"/>
    <property type="chains" value="A=344-455"/>
</dbReference>
<dbReference type="PDB" id="4MR5">
    <property type="method" value="X-ray"/>
    <property type="resolution" value="1.63 A"/>
    <property type="chains" value="A=344-455"/>
</dbReference>
<dbReference type="PDB" id="4MR6">
    <property type="method" value="X-ray"/>
    <property type="resolution" value="1.67 A"/>
    <property type="chains" value="A=344-455"/>
</dbReference>
<dbReference type="PDB" id="4QEU">
    <property type="method" value="X-ray"/>
    <property type="resolution" value="1.50 A"/>
    <property type="chains" value="A=344-455"/>
</dbReference>
<dbReference type="PDB" id="4QEV">
    <property type="method" value="X-ray"/>
    <property type="resolution" value="1.80 A"/>
    <property type="chains" value="A=344-455"/>
</dbReference>
<dbReference type="PDB" id="4QEW">
    <property type="method" value="X-ray"/>
    <property type="resolution" value="1.70 A"/>
    <property type="chains" value="A=344-455"/>
</dbReference>
<dbReference type="PDB" id="4UYF">
    <property type="method" value="X-ray"/>
    <property type="resolution" value="1.60 A"/>
    <property type="chains" value="A/B/C=67-200"/>
</dbReference>
<dbReference type="PDB" id="4UYG">
    <property type="method" value="X-ray"/>
    <property type="resolution" value="2.50 A"/>
    <property type="chains" value="A/B/C/D/E/F=338-473"/>
</dbReference>
<dbReference type="PDB" id="4UYH">
    <property type="method" value="X-ray"/>
    <property type="resolution" value="1.73 A"/>
    <property type="chains" value="A/B/C=67-200"/>
</dbReference>
<dbReference type="PDB" id="5BT5">
    <property type="method" value="X-ray"/>
    <property type="resolution" value="1.40 A"/>
    <property type="chains" value="A=344-455"/>
</dbReference>
<dbReference type="PDB" id="5DFB">
    <property type="method" value="X-ray"/>
    <property type="resolution" value="1.40 A"/>
    <property type="chains" value="A=344-455"/>
</dbReference>
<dbReference type="PDB" id="5DFC">
    <property type="method" value="X-ray"/>
    <property type="resolution" value="1.50 A"/>
    <property type="chains" value="A=344-455"/>
</dbReference>
<dbReference type="PDB" id="5DFD">
    <property type="method" value="X-ray"/>
    <property type="resolution" value="1.50 A"/>
    <property type="chains" value="A=344-455"/>
</dbReference>
<dbReference type="PDB" id="5DW1">
    <property type="method" value="X-ray"/>
    <property type="resolution" value="1.55 A"/>
    <property type="chains" value="A/B/C/D=345-455"/>
</dbReference>
<dbReference type="PDB" id="5EK9">
    <property type="method" value="X-ray"/>
    <property type="resolution" value="2.08 A"/>
    <property type="chains" value="A/B=344-455"/>
</dbReference>
<dbReference type="PDB" id="5HEL">
    <property type="method" value="X-ray"/>
    <property type="resolution" value="1.45 A"/>
    <property type="chains" value="A=71-194"/>
</dbReference>
<dbReference type="PDB" id="5HEM">
    <property type="method" value="X-ray"/>
    <property type="resolution" value="1.65 A"/>
    <property type="chains" value="A/B=71-194"/>
</dbReference>
<dbReference type="PDB" id="5HEN">
    <property type="method" value="X-ray"/>
    <property type="resolution" value="1.79 A"/>
    <property type="chains" value="A/B/C=71-194"/>
</dbReference>
<dbReference type="PDB" id="5HFQ">
    <property type="method" value="X-ray"/>
    <property type="resolution" value="1.40 A"/>
    <property type="chains" value="A=344-455"/>
</dbReference>
<dbReference type="PDB" id="5IBN">
    <property type="method" value="X-ray"/>
    <property type="resolution" value="0.94 A"/>
    <property type="chains" value="A=348-455"/>
</dbReference>
<dbReference type="PDB" id="5IG6">
    <property type="method" value="X-ray"/>
    <property type="resolution" value="0.91 A"/>
    <property type="chains" value="A=348-454"/>
</dbReference>
<dbReference type="PDB" id="5N2L">
    <property type="method" value="X-ray"/>
    <property type="resolution" value="1.89 A"/>
    <property type="chains" value="A/B/C/D=344-455"/>
</dbReference>
<dbReference type="PDB" id="5O38">
    <property type="method" value="X-ray"/>
    <property type="resolution" value="1.20 A"/>
    <property type="chains" value="A=344-455"/>
</dbReference>
<dbReference type="PDB" id="5O39">
    <property type="method" value="X-ray"/>
    <property type="resolution" value="1.74 A"/>
    <property type="chains" value="A=344-455"/>
</dbReference>
<dbReference type="PDB" id="5O3A">
    <property type="method" value="X-ray"/>
    <property type="resolution" value="2.40 A"/>
    <property type="chains" value="A=344-455"/>
</dbReference>
<dbReference type="PDB" id="5O3B">
    <property type="method" value="X-ray"/>
    <property type="resolution" value="1.95 A"/>
    <property type="chains" value="A/B/C/D=344-455"/>
</dbReference>
<dbReference type="PDB" id="5O3C">
    <property type="method" value="X-ray"/>
    <property type="resolution" value="1.60 A"/>
    <property type="chains" value="A=344-455"/>
</dbReference>
<dbReference type="PDB" id="5O3D">
    <property type="method" value="X-ray"/>
    <property type="resolution" value="1.60 A"/>
    <property type="chains" value="A=345-455"/>
</dbReference>
<dbReference type="PDB" id="5O3E">
    <property type="method" value="X-ray"/>
    <property type="resolution" value="1.40 A"/>
    <property type="chains" value="A=344-455"/>
</dbReference>
<dbReference type="PDB" id="5O3F">
    <property type="method" value="X-ray"/>
    <property type="resolution" value="1.75 A"/>
    <property type="chains" value="A=344-455"/>
</dbReference>
<dbReference type="PDB" id="5O3G">
    <property type="method" value="X-ray"/>
    <property type="resolution" value="1.85 A"/>
    <property type="chains" value="A/B=344-455"/>
</dbReference>
<dbReference type="PDB" id="5O3H">
    <property type="method" value="X-ray"/>
    <property type="resolution" value="1.40 A"/>
    <property type="chains" value="A=344-455"/>
</dbReference>
<dbReference type="PDB" id="5O3I">
    <property type="method" value="X-ray"/>
    <property type="resolution" value="1.20 A"/>
    <property type="chains" value="A=344-455"/>
</dbReference>
<dbReference type="PDB" id="5S9O">
    <property type="method" value="X-ray"/>
    <property type="resolution" value="2.49 A"/>
    <property type="chains" value="A/B=73-194"/>
</dbReference>
<dbReference type="PDB" id="5U5S">
    <property type="method" value="NMR"/>
    <property type="chains" value="A=344-455"/>
</dbReference>
<dbReference type="PDB" id="5U6V">
    <property type="method" value="X-ray"/>
    <property type="resolution" value="1.77 A"/>
    <property type="chains" value="A=347-455"/>
</dbReference>
<dbReference type="PDB" id="5UEW">
    <property type="method" value="X-ray"/>
    <property type="resolution" value="1.83 A"/>
    <property type="chains" value="A/B=347-454"/>
</dbReference>
<dbReference type="PDB" id="5XHE">
    <property type="method" value="X-ray"/>
    <property type="resolution" value="1.40 A"/>
    <property type="chains" value="A=348-455"/>
</dbReference>
<dbReference type="PDB" id="5XHK">
    <property type="method" value="X-ray"/>
    <property type="resolution" value="1.28 A"/>
    <property type="chains" value="A=348-455"/>
</dbReference>
<dbReference type="PDB" id="6CUI">
    <property type="method" value="NMR"/>
    <property type="chains" value="A=621-750"/>
</dbReference>
<dbReference type="PDB" id="6DB0">
    <property type="method" value="X-ray"/>
    <property type="resolution" value="1.70 A"/>
    <property type="chains" value="A/B/C=67-200"/>
</dbReference>
<dbReference type="PDB" id="6DBC">
    <property type="method" value="X-ray"/>
    <property type="resolution" value="1.05 A"/>
    <property type="chains" value="A=348-455"/>
</dbReference>
<dbReference type="PDB" id="6DDI">
    <property type="method" value="X-ray"/>
    <property type="resolution" value="1.50 A"/>
    <property type="chains" value="A/B/C=67-200"/>
</dbReference>
<dbReference type="PDB" id="6DDJ">
    <property type="method" value="X-ray"/>
    <property type="resolution" value="1.05 A"/>
    <property type="chains" value="A=348-455"/>
</dbReference>
<dbReference type="PDB" id="6E6J">
    <property type="method" value="X-ray"/>
    <property type="resolution" value="2.44 A"/>
    <property type="chains" value="A/B/C/D/E/F=348-455"/>
</dbReference>
<dbReference type="PDB" id="6FFE">
    <property type="method" value="X-ray"/>
    <property type="resolution" value="1.76 A"/>
    <property type="chains" value="A=344-455"/>
</dbReference>
<dbReference type="PDB" id="6FFF">
    <property type="method" value="X-ray"/>
    <property type="resolution" value="1.67 A"/>
    <property type="chains" value="A=344-455"/>
</dbReference>
<dbReference type="PDB" id="6FFG">
    <property type="method" value="X-ray"/>
    <property type="resolution" value="1.59 A"/>
    <property type="chains" value="A=344-455"/>
</dbReference>
<dbReference type="PDB" id="6I80">
    <property type="method" value="X-ray"/>
    <property type="resolution" value="1.14 A"/>
    <property type="chains" value="A/B=348-455"/>
</dbReference>
<dbReference type="PDB" id="6I81">
    <property type="method" value="X-ray"/>
    <property type="resolution" value="1.74 A"/>
    <property type="chains" value="A=348-455"/>
</dbReference>
<dbReference type="PDB" id="6JKE">
    <property type="method" value="X-ray"/>
    <property type="resolution" value="1.50 A"/>
    <property type="chains" value="A/B/C=73-194"/>
</dbReference>
<dbReference type="PDB" id="6K04">
    <property type="method" value="X-ray"/>
    <property type="resolution" value="1.25 A"/>
    <property type="chains" value="A=344-455"/>
</dbReference>
<dbReference type="PDB" id="6K05">
    <property type="method" value="X-ray"/>
    <property type="resolution" value="1.94 A"/>
    <property type="chains" value="A/B/C=73-194"/>
</dbReference>
<dbReference type="PDB" id="6MO7">
    <property type="method" value="X-ray"/>
    <property type="resolution" value="1.85 A"/>
    <property type="chains" value="A/B/C=71-194"/>
</dbReference>
<dbReference type="PDB" id="6MO8">
    <property type="method" value="X-ray"/>
    <property type="resolution" value="1.80 A"/>
    <property type="chains" value="A/B/C=71-194"/>
</dbReference>
<dbReference type="PDB" id="6MO9">
    <property type="method" value="X-ray"/>
    <property type="resolution" value="1.80 A"/>
    <property type="chains" value="A/B/C=71-194"/>
</dbReference>
<dbReference type="PDB" id="6MOA">
    <property type="method" value="X-ray"/>
    <property type="resolution" value="1.27 A"/>
    <property type="chains" value="A=346-455"/>
</dbReference>
<dbReference type="PDB" id="6ONY">
    <property type="method" value="X-ray"/>
    <property type="resolution" value="1.98 A"/>
    <property type="chains" value="A/B=73-194"/>
</dbReference>
<dbReference type="PDB" id="6SWO">
    <property type="method" value="X-ray"/>
    <property type="resolution" value="1.60 A"/>
    <property type="chains" value="AAA=344-455"/>
</dbReference>
<dbReference type="PDB" id="6SWP">
    <property type="method" value="X-ray"/>
    <property type="resolution" value="1.60 A"/>
    <property type="chains" value="AAA=344-455"/>
</dbReference>
<dbReference type="PDB" id="6TQ1">
    <property type="method" value="X-ray"/>
    <property type="resolution" value="1.90 A"/>
    <property type="chains" value="AAA/BBB/CCC=67-200"/>
</dbReference>
<dbReference type="PDB" id="6TQ2">
    <property type="method" value="X-ray"/>
    <property type="resolution" value="2.26 A"/>
    <property type="chains" value="AAA/BBB/CCC=67-200"/>
</dbReference>
<dbReference type="PDB" id="6U61">
    <property type="method" value="X-ray"/>
    <property type="resolution" value="2.29 A"/>
    <property type="chains" value="A/B=65-194"/>
</dbReference>
<dbReference type="PDB" id="6U71">
    <property type="method" value="X-ray"/>
    <property type="resolution" value="1.47 A"/>
    <property type="chains" value="A=347-455"/>
</dbReference>
<dbReference type="PDB" id="6U8H">
    <property type="method" value="X-ray"/>
    <property type="resolution" value="2.07 A"/>
    <property type="chains" value="A=65-194"/>
</dbReference>
<dbReference type="PDB" id="6ULQ">
    <property type="method" value="X-ray"/>
    <property type="resolution" value="2.70 A"/>
    <property type="chains" value="A/B/C=65-194"/>
</dbReference>
<dbReference type="PDB" id="6ULT">
    <property type="method" value="X-ray"/>
    <property type="resolution" value="2.80 A"/>
    <property type="chains" value="A/B/C/D/E/F/G/H=347-454"/>
</dbReference>
<dbReference type="PDB" id="6VIY">
    <property type="method" value="X-ray"/>
    <property type="resolution" value="1.90 A"/>
    <property type="chains" value="A/B=348-455"/>
</dbReference>
<dbReference type="PDB" id="6WWB">
    <property type="method" value="X-ray"/>
    <property type="resolution" value="1.31 A"/>
    <property type="chains" value="A=348-455"/>
</dbReference>
<dbReference type="PDB" id="6YTM">
    <property type="method" value="X-ray"/>
    <property type="resolution" value="1.56 A"/>
    <property type="chains" value="A/B=345-455"/>
</dbReference>
<dbReference type="PDB" id="6Z7F">
    <property type="method" value="X-ray"/>
    <property type="resolution" value="1.60 A"/>
    <property type="chains" value="AAA=344-455"/>
</dbReference>
<dbReference type="PDB" id="6Z8P">
    <property type="method" value="X-ray"/>
    <property type="resolution" value="1.55 A"/>
    <property type="chains" value="AAA=344-455"/>
</dbReference>
<dbReference type="PDB" id="6ZB0">
    <property type="method" value="X-ray"/>
    <property type="resolution" value="1.61 A"/>
    <property type="chains" value="AAA=344-455"/>
</dbReference>
<dbReference type="PDB" id="6ZB1">
    <property type="method" value="X-ray"/>
    <property type="resolution" value="1.60 A"/>
    <property type="chains" value="AAA=344-455"/>
</dbReference>
<dbReference type="PDB" id="6ZB2">
    <property type="method" value="X-ray"/>
    <property type="resolution" value="2.28 A"/>
    <property type="chains" value="AAA=344-455"/>
</dbReference>
<dbReference type="PDB" id="7DPN">
    <property type="method" value="X-ray"/>
    <property type="resolution" value="1.80 A"/>
    <property type="chains" value="A/B/C=73-194"/>
</dbReference>
<dbReference type="PDB" id="7DPO">
    <property type="method" value="X-ray"/>
    <property type="resolution" value="2.30 A"/>
    <property type="chains" value="A=348-455"/>
</dbReference>
<dbReference type="PDB" id="7ENV">
    <property type="method" value="X-ray"/>
    <property type="resolution" value="2.45 A"/>
    <property type="chains" value="A/B/C=73-194"/>
</dbReference>
<dbReference type="PDB" id="7ENZ">
    <property type="method" value="X-ray"/>
    <property type="resolution" value="1.70 A"/>
    <property type="chains" value="A=348-455"/>
</dbReference>
<dbReference type="PDB" id="7EO5">
    <property type="method" value="X-ray"/>
    <property type="resolution" value="2.00 A"/>
    <property type="chains" value="A=348-455"/>
</dbReference>
<dbReference type="PDB" id="7JX7">
    <property type="method" value="X-ray"/>
    <property type="resolution" value="1.75 A"/>
    <property type="chains" value="A=347-455"/>
</dbReference>
<dbReference type="PDB" id="7L6D">
    <property type="method" value="X-ray"/>
    <property type="resolution" value="1.55 A"/>
    <property type="chains" value="A=344-455"/>
</dbReference>
<dbReference type="PDB" id="7L9G">
    <property type="method" value="X-ray"/>
    <property type="resolution" value="1.36 A"/>
    <property type="chains" value="A=344-455"/>
</dbReference>
<dbReference type="PDB" id="7L9J">
    <property type="method" value="X-ray"/>
    <property type="resolution" value="1.85 A"/>
    <property type="chains" value="A=344-455"/>
</dbReference>
<dbReference type="PDB" id="7L9K">
    <property type="method" value="X-ray"/>
    <property type="resolution" value="1.95 A"/>
    <property type="chains" value="A/B=344-455"/>
</dbReference>
<dbReference type="PDB" id="7LAK">
    <property type="method" value="X-ray"/>
    <property type="resolution" value="1.83 A"/>
    <property type="chains" value="A=73-194"/>
</dbReference>
<dbReference type="PDB" id="7NPY">
    <property type="method" value="X-ray"/>
    <property type="resolution" value="1.60 A"/>
    <property type="chains" value="AAA=344-455"/>
</dbReference>
<dbReference type="PDB" id="7NPZ">
    <property type="method" value="X-ray"/>
    <property type="resolution" value="1.28 A"/>
    <property type="chains" value="AAA=344-455"/>
</dbReference>
<dbReference type="PDB" id="7NQ0">
    <property type="method" value="X-ray"/>
    <property type="resolution" value="1.30 A"/>
    <property type="chains" value="AAA=344-455"/>
</dbReference>
<dbReference type="PDB" id="7NQ1">
    <property type="method" value="X-ray"/>
    <property type="resolution" value="1.60 A"/>
    <property type="chains" value="AAA=344-455"/>
</dbReference>
<dbReference type="PDB" id="7NQ2">
    <property type="method" value="X-ray"/>
    <property type="resolution" value="1.74 A"/>
    <property type="chains" value="AAA=344-455"/>
</dbReference>
<dbReference type="PDB" id="7NQ3">
    <property type="method" value="X-ray"/>
    <property type="resolution" value="1.60 A"/>
    <property type="chains" value="AAA=344-455"/>
</dbReference>
<dbReference type="PDB" id="7NQ5">
    <property type="method" value="X-ray"/>
    <property type="resolution" value="1.60 A"/>
    <property type="chains" value="AAA=344-455"/>
</dbReference>
<dbReference type="PDB" id="7NQ7">
    <property type="method" value="X-ray"/>
    <property type="resolution" value="1.70 A"/>
    <property type="chains" value="AAA=344-455"/>
</dbReference>
<dbReference type="PDB" id="7NQ8">
    <property type="method" value="X-ray"/>
    <property type="resolution" value="1.60 A"/>
    <property type="chains" value="A=344-455"/>
</dbReference>
<dbReference type="PDB" id="7NQ9">
    <property type="method" value="X-ray"/>
    <property type="resolution" value="1.60 A"/>
    <property type="chains" value="AAA=344-455"/>
</dbReference>
<dbReference type="PDB" id="7NQI">
    <property type="method" value="X-ray"/>
    <property type="resolution" value="1.60 A"/>
    <property type="chains" value="A=344-455"/>
</dbReference>
<dbReference type="PDB" id="7NQJ">
    <property type="method" value="X-ray"/>
    <property type="resolution" value="1.73 A"/>
    <property type="chains" value="A=344-455"/>
</dbReference>
<dbReference type="PDB" id="7OE4">
    <property type="method" value="X-ray"/>
    <property type="resolution" value="1.65 A"/>
    <property type="chains" value="AAA=344-455"/>
</dbReference>
<dbReference type="PDB" id="7OE5">
    <property type="method" value="X-ray"/>
    <property type="resolution" value="1.60 A"/>
    <property type="chains" value="AAA=344-455"/>
</dbReference>
<dbReference type="PDB" id="7OE6">
    <property type="method" value="X-ray"/>
    <property type="resolution" value="1.76 A"/>
    <property type="chains" value="AAA=344-455"/>
</dbReference>
<dbReference type="PDB" id="7OE8">
    <property type="method" value="X-ray"/>
    <property type="resolution" value="1.30 A"/>
    <property type="chains" value="A=344-455"/>
</dbReference>
<dbReference type="PDB" id="7OE9">
    <property type="method" value="X-ray"/>
    <property type="resolution" value="1.60 A"/>
    <property type="chains" value="A=344-455"/>
</dbReference>
<dbReference type="PDB" id="7OEP">
    <property type="method" value="X-ray"/>
    <property type="resolution" value="1.80 A"/>
    <property type="chains" value="AAA=344-455"/>
</dbReference>
<dbReference type="PDB" id="7OER">
    <property type="method" value="X-ray"/>
    <property type="resolution" value="1.60 A"/>
    <property type="chains" value="AAA=344-455"/>
</dbReference>
<dbReference type="PDB" id="7OES">
    <property type="method" value="X-ray"/>
    <property type="resolution" value="1.60 A"/>
    <property type="chains" value="AAA=344-455"/>
</dbReference>
<dbReference type="PDB" id="7OET">
    <property type="method" value="X-ray"/>
    <property type="resolution" value="1.41 A"/>
    <property type="chains" value="AAA=344-455"/>
</dbReference>
<dbReference type="PDB" id="7OGY">
    <property type="method" value="X-ray"/>
    <property type="resolution" value="1.60 A"/>
    <property type="chains" value="AAA=344-455"/>
</dbReference>
<dbReference type="PDB" id="7Q5O">
    <property type="method" value="X-ray"/>
    <property type="resolution" value="1.52 A"/>
    <property type="chains" value="A=346-454"/>
</dbReference>
<dbReference type="PDB" id="7USG">
    <property type="method" value="X-ray"/>
    <property type="resolution" value="1.20 A"/>
    <property type="chains" value="A=348-455"/>
</dbReference>
<dbReference type="PDB" id="7USH">
    <property type="method" value="X-ray"/>
    <property type="resolution" value="1.27 A"/>
    <property type="chains" value="A=348-455"/>
</dbReference>
<dbReference type="PDB" id="7USI">
    <property type="method" value="X-ray"/>
    <property type="resolution" value="2.50 A"/>
    <property type="chains" value="A/B/C/D/E/F=73-183"/>
</dbReference>
<dbReference type="PDB" id="7UU0">
    <property type="method" value="X-ray"/>
    <property type="resolution" value="1.30 A"/>
    <property type="chains" value="A=344-455"/>
</dbReference>
<dbReference type="PDB" id="7VRH">
    <property type="method" value="X-ray"/>
    <property type="resolution" value="2.20 A"/>
    <property type="chains" value="A/B/C=73-194"/>
</dbReference>
<dbReference type="PDB" id="7VRI">
    <property type="method" value="X-ray"/>
    <property type="resolution" value="1.50 A"/>
    <property type="chains" value="A=348-455"/>
</dbReference>
<dbReference type="PDB" id="7VRK">
    <property type="method" value="X-ray"/>
    <property type="resolution" value="2.48 A"/>
    <property type="chains" value="A/B/C=73-194"/>
</dbReference>
<dbReference type="PDB" id="7VRM">
    <property type="method" value="X-ray"/>
    <property type="resolution" value="1.10 A"/>
    <property type="chains" value="A=348-455"/>
</dbReference>
<dbReference type="PDB" id="7VRO">
    <property type="method" value="X-ray"/>
    <property type="resolution" value="2.35 A"/>
    <property type="chains" value="A/B/C=73-194"/>
</dbReference>
<dbReference type="PDB" id="7VRQ">
    <property type="method" value="X-ray"/>
    <property type="resolution" value="1.15 A"/>
    <property type="chains" value="A=348-455"/>
</dbReference>
<dbReference type="PDB" id="7VRZ">
    <property type="method" value="X-ray"/>
    <property type="resolution" value="2.05 A"/>
    <property type="chains" value="A/B/C=73-194"/>
</dbReference>
<dbReference type="PDB" id="7VS0">
    <property type="method" value="X-ray"/>
    <property type="resolution" value="1.25 A"/>
    <property type="chains" value="A=348-455"/>
</dbReference>
<dbReference type="PDB" id="7VS1">
    <property type="method" value="X-ray"/>
    <property type="resolution" value="1.25 A"/>
    <property type="chains" value="A=348-455"/>
</dbReference>
<dbReference type="PDB" id="7VSF">
    <property type="method" value="X-ray"/>
    <property type="resolution" value="2.50 A"/>
    <property type="chains" value="A/B/C=73-194"/>
</dbReference>
<dbReference type="PDB" id="7WLN">
    <property type="method" value="X-ray"/>
    <property type="resolution" value="2.85 A"/>
    <property type="chains" value="A/B/C/D=344-455"/>
</dbReference>
<dbReference type="PDB" id="7WMQ">
    <property type="method" value="X-ray"/>
    <property type="resolution" value="2.37 A"/>
    <property type="chains" value="A/B/C/D=344-455"/>
</dbReference>
<dbReference type="PDB" id="7WMU">
    <property type="method" value="X-ray"/>
    <property type="resolution" value="1.73 A"/>
    <property type="chains" value="A=344-455"/>
</dbReference>
<dbReference type="PDB" id="7WN5">
    <property type="method" value="X-ray"/>
    <property type="resolution" value="1.70 A"/>
    <property type="chains" value="A/B=344-455"/>
</dbReference>
<dbReference type="PDB" id="7WNA">
    <property type="method" value="X-ray"/>
    <property type="resolution" value="2.60 A"/>
    <property type="chains" value="A/B/C/D/E/F=344-455"/>
</dbReference>
<dbReference type="PDB" id="7WNI">
    <property type="method" value="X-ray"/>
    <property type="resolution" value="3.12 A"/>
    <property type="chains" value="A/B=344-455"/>
</dbReference>
<dbReference type="PDB" id="8B5G">
    <property type="method" value="X-ray"/>
    <property type="resolution" value="1.62 A"/>
    <property type="chains" value="AAA=344-455"/>
</dbReference>
<dbReference type="PDB" id="8B5H">
    <property type="method" value="X-ray"/>
    <property type="resolution" value="1.60 A"/>
    <property type="chains" value="AAA=344-455"/>
</dbReference>
<dbReference type="PDB" id="8B5I">
    <property type="method" value="X-ray"/>
    <property type="resolution" value="1.60 A"/>
    <property type="chains" value="AAA=344-455"/>
</dbReference>
<dbReference type="PDB" id="8B5J">
    <property type="method" value="X-ray"/>
    <property type="resolution" value="1.60 A"/>
    <property type="chains" value="AAA=344-455"/>
</dbReference>
<dbReference type="PDB" id="8CV7">
    <property type="method" value="X-ray"/>
    <property type="resolution" value="1.60 A"/>
    <property type="chains" value="A/B=347-455"/>
</dbReference>
<dbReference type="PDB" id="8DNQ">
    <property type="method" value="X-ray"/>
    <property type="resolution" value="1.84 A"/>
    <property type="chains" value="A/B=65-194"/>
</dbReference>
<dbReference type="PDB" id="8PX2">
    <property type="method" value="X-ray"/>
    <property type="resolution" value="1.62 A"/>
    <property type="chains" value="A=344-455"/>
</dbReference>
<dbReference type="PDB" id="8PX8">
    <property type="method" value="X-ray"/>
    <property type="resolution" value="1.60 A"/>
    <property type="chains" value="A=344-455"/>
</dbReference>
<dbReference type="PDB" id="8SB6">
    <property type="method" value="X-ray"/>
    <property type="resolution" value="1.80 A"/>
    <property type="chains" value="A/B/C=86-206"/>
</dbReference>
<dbReference type="PDB" id="8WYG">
    <property type="method" value="X-ray"/>
    <property type="resolution" value="3.13 A"/>
    <property type="chains" value="A/B/C/D=344-455"/>
</dbReference>
<dbReference type="PDB" id="8Z69">
    <property type="method" value="X-ray"/>
    <property type="resolution" value="1.77 A"/>
    <property type="chains" value="A/B/C/D=344-455"/>
</dbReference>
<dbReference type="PDB" id="9FBX">
    <property type="method" value="X-ray"/>
    <property type="resolution" value="1.60 A"/>
    <property type="chains" value="A=344-455"/>
</dbReference>
<dbReference type="PDBsum" id="1X0J"/>
<dbReference type="PDBsum" id="2DVQ"/>
<dbReference type="PDBsum" id="2DVR"/>
<dbReference type="PDBsum" id="2DVS"/>
<dbReference type="PDBsum" id="2DVV"/>
<dbReference type="PDBsum" id="2E3K"/>
<dbReference type="PDBsum" id="2G4A"/>
<dbReference type="PDBsum" id="2YDW"/>
<dbReference type="PDBsum" id="2YEK"/>
<dbReference type="PDBsum" id="3AQA"/>
<dbReference type="PDBsum" id="3ONI"/>
<dbReference type="PDBsum" id="4A9E"/>
<dbReference type="PDBsum" id="4A9F"/>
<dbReference type="PDBsum" id="4A9H"/>
<dbReference type="PDBsum" id="4A9I"/>
<dbReference type="PDBsum" id="4A9J"/>
<dbReference type="PDBsum" id="4A9M"/>
<dbReference type="PDBsum" id="4A9N"/>
<dbReference type="PDBsum" id="4A9O"/>
<dbReference type="PDBsum" id="4AKN"/>
<dbReference type="PDBsum" id="4ALG"/>
<dbReference type="PDBsum" id="4ALH"/>
<dbReference type="PDBsum" id="4J1P"/>
<dbReference type="PDBsum" id="4MR5"/>
<dbReference type="PDBsum" id="4MR6"/>
<dbReference type="PDBsum" id="4QEU"/>
<dbReference type="PDBsum" id="4QEV"/>
<dbReference type="PDBsum" id="4QEW"/>
<dbReference type="PDBsum" id="4UYF"/>
<dbReference type="PDBsum" id="4UYG"/>
<dbReference type="PDBsum" id="4UYH"/>
<dbReference type="PDBsum" id="5BT5"/>
<dbReference type="PDBsum" id="5DFB"/>
<dbReference type="PDBsum" id="5DFC"/>
<dbReference type="PDBsum" id="5DFD"/>
<dbReference type="PDBsum" id="5DW1"/>
<dbReference type="PDBsum" id="5EK9"/>
<dbReference type="PDBsum" id="5HEL"/>
<dbReference type="PDBsum" id="5HEM"/>
<dbReference type="PDBsum" id="5HEN"/>
<dbReference type="PDBsum" id="5HFQ"/>
<dbReference type="PDBsum" id="5IBN"/>
<dbReference type="PDBsum" id="5IG6"/>
<dbReference type="PDBsum" id="5N2L"/>
<dbReference type="PDBsum" id="5O38"/>
<dbReference type="PDBsum" id="5O39"/>
<dbReference type="PDBsum" id="5O3A"/>
<dbReference type="PDBsum" id="5O3B"/>
<dbReference type="PDBsum" id="5O3C"/>
<dbReference type="PDBsum" id="5O3D"/>
<dbReference type="PDBsum" id="5O3E"/>
<dbReference type="PDBsum" id="5O3F"/>
<dbReference type="PDBsum" id="5O3G"/>
<dbReference type="PDBsum" id="5O3H"/>
<dbReference type="PDBsum" id="5O3I"/>
<dbReference type="PDBsum" id="5S9O"/>
<dbReference type="PDBsum" id="5U5S"/>
<dbReference type="PDBsum" id="5U6V"/>
<dbReference type="PDBsum" id="5UEW"/>
<dbReference type="PDBsum" id="5XHE"/>
<dbReference type="PDBsum" id="5XHK"/>
<dbReference type="PDBsum" id="6CUI"/>
<dbReference type="PDBsum" id="6DB0"/>
<dbReference type="PDBsum" id="6DBC"/>
<dbReference type="PDBsum" id="6DDI"/>
<dbReference type="PDBsum" id="6DDJ"/>
<dbReference type="PDBsum" id="6E6J"/>
<dbReference type="PDBsum" id="6FFE"/>
<dbReference type="PDBsum" id="6FFF"/>
<dbReference type="PDBsum" id="6FFG"/>
<dbReference type="PDBsum" id="6I80"/>
<dbReference type="PDBsum" id="6I81"/>
<dbReference type="PDBsum" id="6JKE"/>
<dbReference type="PDBsum" id="6K04"/>
<dbReference type="PDBsum" id="6K05"/>
<dbReference type="PDBsum" id="6MO7"/>
<dbReference type="PDBsum" id="6MO8"/>
<dbReference type="PDBsum" id="6MO9"/>
<dbReference type="PDBsum" id="6MOA"/>
<dbReference type="PDBsum" id="6ONY"/>
<dbReference type="PDBsum" id="6SWO"/>
<dbReference type="PDBsum" id="6SWP"/>
<dbReference type="PDBsum" id="6TQ1"/>
<dbReference type="PDBsum" id="6TQ2"/>
<dbReference type="PDBsum" id="6U61"/>
<dbReference type="PDBsum" id="6U71"/>
<dbReference type="PDBsum" id="6U8H"/>
<dbReference type="PDBsum" id="6ULQ"/>
<dbReference type="PDBsum" id="6ULT"/>
<dbReference type="PDBsum" id="6VIY"/>
<dbReference type="PDBsum" id="6WWB"/>
<dbReference type="PDBsum" id="6YTM"/>
<dbReference type="PDBsum" id="6Z7F"/>
<dbReference type="PDBsum" id="6Z8P"/>
<dbReference type="PDBsum" id="6ZB0"/>
<dbReference type="PDBsum" id="6ZB1"/>
<dbReference type="PDBsum" id="6ZB2"/>
<dbReference type="PDBsum" id="7DPN"/>
<dbReference type="PDBsum" id="7DPO"/>
<dbReference type="PDBsum" id="7ENV"/>
<dbReference type="PDBsum" id="7ENZ"/>
<dbReference type="PDBsum" id="7EO5"/>
<dbReference type="PDBsum" id="7JX7"/>
<dbReference type="PDBsum" id="7L6D"/>
<dbReference type="PDBsum" id="7L9G"/>
<dbReference type="PDBsum" id="7L9J"/>
<dbReference type="PDBsum" id="7L9K"/>
<dbReference type="PDBsum" id="7LAK"/>
<dbReference type="PDBsum" id="7NPY"/>
<dbReference type="PDBsum" id="7NPZ"/>
<dbReference type="PDBsum" id="7NQ0"/>
<dbReference type="PDBsum" id="7NQ1"/>
<dbReference type="PDBsum" id="7NQ2"/>
<dbReference type="PDBsum" id="7NQ3"/>
<dbReference type="PDBsum" id="7NQ5"/>
<dbReference type="PDBsum" id="7NQ7"/>
<dbReference type="PDBsum" id="7NQ8"/>
<dbReference type="PDBsum" id="7NQ9"/>
<dbReference type="PDBsum" id="7NQI"/>
<dbReference type="PDBsum" id="7NQJ"/>
<dbReference type="PDBsum" id="7OE4"/>
<dbReference type="PDBsum" id="7OE5"/>
<dbReference type="PDBsum" id="7OE6"/>
<dbReference type="PDBsum" id="7OE8"/>
<dbReference type="PDBsum" id="7OE9"/>
<dbReference type="PDBsum" id="7OEP"/>
<dbReference type="PDBsum" id="7OER"/>
<dbReference type="PDBsum" id="7OES"/>
<dbReference type="PDBsum" id="7OET"/>
<dbReference type="PDBsum" id="7OGY"/>
<dbReference type="PDBsum" id="7Q5O"/>
<dbReference type="PDBsum" id="7USG"/>
<dbReference type="PDBsum" id="7USH"/>
<dbReference type="PDBsum" id="7USI"/>
<dbReference type="PDBsum" id="7UU0"/>
<dbReference type="PDBsum" id="7VRH"/>
<dbReference type="PDBsum" id="7VRI"/>
<dbReference type="PDBsum" id="7VRK"/>
<dbReference type="PDBsum" id="7VRM"/>
<dbReference type="PDBsum" id="7VRO"/>
<dbReference type="PDBsum" id="7VRQ"/>
<dbReference type="PDBsum" id="7VRZ"/>
<dbReference type="PDBsum" id="7VS0"/>
<dbReference type="PDBsum" id="7VS1"/>
<dbReference type="PDBsum" id="7VSF"/>
<dbReference type="PDBsum" id="7WLN"/>
<dbReference type="PDBsum" id="7WMQ"/>
<dbReference type="PDBsum" id="7WMU"/>
<dbReference type="PDBsum" id="7WN5"/>
<dbReference type="PDBsum" id="7WNA"/>
<dbReference type="PDBsum" id="7WNI"/>
<dbReference type="PDBsum" id="8B5G"/>
<dbReference type="PDBsum" id="8B5H"/>
<dbReference type="PDBsum" id="8B5I"/>
<dbReference type="PDBsum" id="8B5J"/>
<dbReference type="PDBsum" id="8CV7"/>
<dbReference type="PDBsum" id="8DNQ"/>
<dbReference type="PDBsum" id="8PX2"/>
<dbReference type="PDBsum" id="8PX8"/>
<dbReference type="PDBsum" id="8SB6"/>
<dbReference type="PDBsum" id="8WYG"/>
<dbReference type="PDBsum" id="8Z69"/>
<dbReference type="PDBsum" id="9FBX"/>
<dbReference type="SASBDB" id="P25440"/>
<dbReference type="SMR" id="P25440"/>
<dbReference type="BioGRID" id="111973">
    <property type="interactions" value="436"/>
</dbReference>
<dbReference type="DIP" id="DIP-60835N"/>
<dbReference type="FunCoup" id="P25440">
    <property type="interactions" value="3292"/>
</dbReference>
<dbReference type="IntAct" id="P25440">
    <property type="interactions" value="74"/>
</dbReference>
<dbReference type="MINT" id="P25440"/>
<dbReference type="STRING" id="9606.ENSP00000378702"/>
<dbReference type="BindingDB" id="P25440"/>
<dbReference type="ChEMBL" id="CHEMBL1293289"/>
<dbReference type="DrugBank" id="DB19199">
    <property type="generic name" value="ABBV-744"/>
</dbReference>
<dbReference type="DrugBank" id="DB15189">
    <property type="generic name" value="Birabresib"/>
</dbReference>
<dbReference type="GuidetoPHARMACOLOGY" id="1944"/>
<dbReference type="GlyCosmos" id="P25440">
    <property type="glycosylation" value="6 sites, 2 glycans"/>
</dbReference>
<dbReference type="GlyGen" id="P25440">
    <property type="glycosylation" value="7 sites, 2 O-linked glycans (7 sites)"/>
</dbReference>
<dbReference type="iPTMnet" id="P25440"/>
<dbReference type="PhosphoSitePlus" id="P25440"/>
<dbReference type="BioMuta" id="BRD2"/>
<dbReference type="DMDM" id="12230989"/>
<dbReference type="CPTAC" id="CPTAC-1598"/>
<dbReference type="jPOST" id="P25440"/>
<dbReference type="MassIVE" id="P25440"/>
<dbReference type="PaxDb" id="9606-ENSP00000378704"/>
<dbReference type="PeptideAtlas" id="P25440"/>
<dbReference type="ProteomicsDB" id="54271">
    <molecule id="P25440-1"/>
</dbReference>
<dbReference type="ProteomicsDB" id="54272">
    <molecule id="P25440-2"/>
</dbReference>
<dbReference type="ProteomicsDB" id="65931"/>
<dbReference type="Pumba" id="P25440"/>
<dbReference type="ABCD" id="P25440">
    <property type="antibodies" value="1 sequenced antibody"/>
</dbReference>
<dbReference type="Antibodypedia" id="28816">
    <property type="antibodies" value="414 antibodies from 39 providers"/>
</dbReference>
<dbReference type="DNASU" id="6046"/>
<dbReference type="Ensembl" id="ENST00000374825.9">
    <molecule id="P25440-1"/>
    <property type="protein sequence ID" value="ENSP00000363958.4"/>
    <property type="gene ID" value="ENSG00000204256.15"/>
</dbReference>
<dbReference type="Ensembl" id="ENST00000374831.8">
    <molecule id="P25440-1"/>
    <property type="protein sequence ID" value="ENSP00000363964.4"/>
    <property type="gene ID" value="ENSG00000204256.15"/>
</dbReference>
<dbReference type="Ensembl" id="ENST00000383108.6">
    <molecule id="P25440-1"/>
    <property type="protein sequence ID" value="ENSP00000372588.2"/>
    <property type="gene ID" value="ENSG00000234507.9"/>
</dbReference>
<dbReference type="Ensembl" id="ENST00000395287.5">
    <molecule id="P25440-2"/>
    <property type="protein sequence ID" value="ENSP00000378702.1"/>
    <property type="gene ID" value="ENSG00000204256.15"/>
</dbReference>
<dbReference type="Ensembl" id="ENST00000399527.5">
    <molecule id="P25440-2"/>
    <property type="protein sequence ID" value="ENSP00000382443.1"/>
    <property type="gene ID" value="ENSG00000215077.10"/>
</dbReference>
<dbReference type="Ensembl" id="ENST00000399528.5">
    <molecule id="P25440-1"/>
    <property type="protein sequence ID" value="ENSP00000382444.1"/>
    <property type="gene ID" value="ENSG00000215077.10"/>
</dbReference>
<dbReference type="Ensembl" id="ENST00000399529.7">
    <molecule id="P25440-1"/>
    <property type="protein sequence ID" value="ENSP00000382445.3"/>
    <property type="gene ID" value="ENSG00000215077.10"/>
</dbReference>
<dbReference type="Ensembl" id="ENST00000414731.6">
    <property type="protein sequence ID" value="ENSP00000391246.2"/>
    <property type="gene ID" value="ENSG00000234704.9"/>
</dbReference>
<dbReference type="Ensembl" id="ENST00000436979.5">
    <molecule id="P25440-3"/>
    <property type="protein sequence ID" value="ENSP00000405634.1"/>
    <property type="gene ID" value="ENSG00000235307.12"/>
</dbReference>
<dbReference type="Ensembl" id="ENST00000438194.6">
    <molecule id="P25440-1"/>
    <property type="protein sequence ID" value="ENSP00000401791.2"/>
    <property type="gene ID" value="ENSG00000234507.9"/>
</dbReference>
<dbReference type="Ensembl" id="ENST00000442863.5">
    <molecule id="P25440-2"/>
    <property type="protein sequence ID" value="ENSP00000410994.1"/>
    <property type="gene ID" value="ENSG00000234507.9"/>
</dbReference>
<dbReference type="Ensembl" id="ENST00000448067.5">
    <molecule id="P25440-2"/>
    <property type="protein sequence ID" value="ENSP00000412885.1"/>
    <property type="gene ID" value="ENSG00000235307.12"/>
</dbReference>
<dbReference type="Ensembl" id="ENST00000449085.4">
    <molecule id="P25440-1"/>
    <property type="protein sequence ID" value="ENSP00000409145.3"/>
    <property type="gene ID" value="ENSG00000204256.15"/>
</dbReference>
<dbReference type="Ensembl" id="ENST00000449118.5">
    <property type="protein sequence ID" value="ENSP00000399009.1"/>
    <property type="gene ID" value="ENSG00000234704.9"/>
</dbReference>
<dbReference type="Ensembl" id="ENST00000549126.4">
    <molecule id="P25440-1"/>
    <property type="protein sequence ID" value="ENSP00000449380.2"/>
    <property type="gene ID" value="ENSG00000235307.12"/>
</dbReference>
<dbReference type="Ensembl" id="ENST00000552587.4">
    <molecule id="P25440-1"/>
    <property type="protein sequence ID" value="ENSP00000449609.1"/>
    <property type="gene ID" value="ENSG00000235307.12"/>
</dbReference>
<dbReference type="Ensembl" id="ENST00000678250.1">
    <molecule id="P25440-1"/>
    <property type="protein sequence ID" value="ENSP00000502900.1"/>
    <property type="gene ID" value="ENSG00000204256.15"/>
</dbReference>
<dbReference type="GeneID" id="6046"/>
<dbReference type="KEGG" id="hsa:6046"/>
<dbReference type="MANE-Select" id="ENST00000374825.9">
    <property type="protein sequence ID" value="ENSP00000363958.4"/>
    <property type="RefSeq nucleotide sequence ID" value="NM_005104.4"/>
    <property type="RefSeq protein sequence ID" value="NP_005095.1"/>
</dbReference>
<dbReference type="UCSC" id="uc003ocn.4">
    <molecule id="P25440-1"/>
    <property type="organism name" value="human"/>
</dbReference>
<dbReference type="AGR" id="HGNC:1103"/>
<dbReference type="CTD" id="6046"/>
<dbReference type="DisGeNET" id="6046"/>
<dbReference type="GeneCards" id="BRD2"/>
<dbReference type="HGNC" id="HGNC:1103">
    <property type="gene designation" value="BRD2"/>
</dbReference>
<dbReference type="HPA" id="ENSG00000204256">
    <property type="expression patterns" value="Low tissue specificity"/>
</dbReference>
<dbReference type="MIM" id="601540">
    <property type="type" value="gene"/>
</dbReference>
<dbReference type="neXtProt" id="NX_P25440"/>
<dbReference type="OpenTargets" id="ENSG00000204256"/>
<dbReference type="PharmGKB" id="PA25414"/>
<dbReference type="VEuPathDB" id="HostDB:ENSG00000204256"/>
<dbReference type="eggNOG" id="KOG1474">
    <property type="taxonomic scope" value="Eukaryota"/>
</dbReference>
<dbReference type="GeneTree" id="ENSGT00940000153385"/>
<dbReference type="HOGENOM" id="CLU_001499_0_4_1"/>
<dbReference type="InParanoid" id="P25440"/>
<dbReference type="OMA" id="GGMDQHT"/>
<dbReference type="OrthoDB" id="21449at2759"/>
<dbReference type="PAN-GO" id="P25440">
    <property type="GO annotations" value="5 GO annotations based on evolutionary models"/>
</dbReference>
<dbReference type="PhylomeDB" id="P25440"/>
<dbReference type="TreeFam" id="TF317345"/>
<dbReference type="PathwayCommons" id="P25440"/>
<dbReference type="Reactome" id="R-HSA-8951936">
    <property type="pathway name" value="RUNX3 regulates p14-ARF"/>
</dbReference>
<dbReference type="SignaLink" id="P25440"/>
<dbReference type="SIGNOR" id="P25440"/>
<dbReference type="BioGRID-ORCS" id="6046">
    <property type="hits" value="296 hits in 1214 CRISPR screens"/>
</dbReference>
<dbReference type="ChiTaRS" id="BRD2">
    <property type="organism name" value="human"/>
</dbReference>
<dbReference type="EvolutionaryTrace" id="P25440"/>
<dbReference type="GeneWiki" id="BRD2"/>
<dbReference type="GenomeRNAi" id="6046"/>
<dbReference type="Pharos" id="P25440">
    <property type="development level" value="Tchem"/>
</dbReference>
<dbReference type="PRO" id="PR:P25440"/>
<dbReference type="Proteomes" id="UP000005640">
    <property type="component" value="Chromosome 6"/>
</dbReference>
<dbReference type="RNAct" id="P25440">
    <property type="molecule type" value="protein"/>
</dbReference>
<dbReference type="Bgee" id="ENSG00000204256">
    <property type="expression patterns" value="Expressed in ventricular zone and 98 other cell types or tissues"/>
</dbReference>
<dbReference type="ExpressionAtlas" id="P25440">
    <property type="expression patterns" value="baseline and differential"/>
</dbReference>
<dbReference type="GO" id="GO:0000785">
    <property type="term" value="C:chromatin"/>
    <property type="evidence" value="ECO:0000314"/>
    <property type="project" value="UniProtKB"/>
</dbReference>
<dbReference type="GO" id="GO:0005737">
    <property type="term" value="C:cytoplasm"/>
    <property type="evidence" value="ECO:0007669"/>
    <property type="project" value="Ensembl"/>
</dbReference>
<dbReference type="GO" id="GO:0016607">
    <property type="term" value="C:nuclear speck"/>
    <property type="evidence" value="ECO:0000314"/>
    <property type="project" value="HPA"/>
</dbReference>
<dbReference type="GO" id="GO:0005654">
    <property type="term" value="C:nucleoplasm"/>
    <property type="evidence" value="ECO:0000314"/>
    <property type="project" value="HPA"/>
</dbReference>
<dbReference type="GO" id="GO:0005634">
    <property type="term" value="C:nucleus"/>
    <property type="evidence" value="ECO:0000314"/>
    <property type="project" value="UniProtKB"/>
</dbReference>
<dbReference type="GO" id="GO:0140033">
    <property type="term" value="F:acetylation-dependent protein binding"/>
    <property type="evidence" value="ECO:0000314"/>
    <property type="project" value="UniProtKB"/>
</dbReference>
<dbReference type="GO" id="GO:0003682">
    <property type="term" value="F:chromatin binding"/>
    <property type="evidence" value="ECO:0000318"/>
    <property type="project" value="GO_Central"/>
</dbReference>
<dbReference type="GO" id="GO:0042393">
    <property type="term" value="F:histone binding"/>
    <property type="evidence" value="ECO:0000318"/>
    <property type="project" value="GO_Central"/>
</dbReference>
<dbReference type="GO" id="GO:0140015">
    <property type="term" value="F:histone H3K14ac reader activity"/>
    <property type="evidence" value="ECO:0000314"/>
    <property type="project" value="GO_Central"/>
</dbReference>
<dbReference type="GO" id="GO:0140011">
    <property type="term" value="F:histone H4K12ac reader activity"/>
    <property type="evidence" value="ECO:0000314"/>
    <property type="project" value="UniProtKB"/>
</dbReference>
<dbReference type="GO" id="GO:0140012">
    <property type="term" value="F:histone H4K5ac reader activity"/>
    <property type="evidence" value="ECO:0000314"/>
    <property type="project" value="UniProtKB"/>
</dbReference>
<dbReference type="GO" id="GO:0004674">
    <property type="term" value="F:protein serine/threonine kinase activity"/>
    <property type="evidence" value="ECO:0000314"/>
    <property type="project" value="FlyBase"/>
</dbReference>
<dbReference type="GO" id="GO:0140588">
    <property type="term" value="P:chromatin looping"/>
    <property type="evidence" value="ECO:0000314"/>
    <property type="project" value="UniProtKB"/>
</dbReference>
<dbReference type="GO" id="GO:0006338">
    <property type="term" value="P:chromatin remodeling"/>
    <property type="evidence" value="ECO:0000318"/>
    <property type="project" value="GO_Central"/>
</dbReference>
<dbReference type="GO" id="GO:0001843">
    <property type="term" value="P:neural tube closure"/>
    <property type="evidence" value="ECO:0007669"/>
    <property type="project" value="Ensembl"/>
</dbReference>
<dbReference type="GO" id="GO:0006334">
    <property type="term" value="P:nucleosome assembly"/>
    <property type="evidence" value="ECO:0000315"/>
    <property type="project" value="UniProtKB"/>
</dbReference>
<dbReference type="GO" id="GO:2000330">
    <property type="term" value="P:positive regulation of T-helper 17 cell lineage commitment"/>
    <property type="evidence" value="ECO:0000314"/>
    <property type="project" value="UniProtKB"/>
</dbReference>
<dbReference type="GO" id="GO:0071168">
    <property type="term" value="P:protein localization to chromatin"/>
    <property type="evidence" value="ECO:0000314"/>
    <property type="project" value="UniProtKB"/>
</dbReference>
<dbReference type="GO" id="GO:0006357">
    <property type="term" value="P:regulation of transcription by RNA polymerase II"/>
    <property type="evidence" value="ECO:0000314"/>
    <property type="project" value="UniProtKB"/>
</dbReference>
<dbReference type="GO" id="GO:0007283">
    <property type="term" value="P:spermatogenesis"/>
    <property type="evidence" value="ECO:0000304"/>
    <property type="project" value="ProtInc"/>
</dbReference>
<dbReference type="CDD" id="cd05497">
    <property type="entry name" value="Bromo_Brdt_I_like"/>
    <property type="match status" value="1"/>
</dbReference>
<dbReference type="CDD" id="cd05498">
    <property type="entry name" value="Bromo_Brdt_II_like"/>
    <property type="match status" value="1"/>
</dbReference>
<dbReference type="FunFam" id="1.20.920.10:FF:000003">
    <property type="entry name" value="Bromodomain-containing protein 2"/>
    <property type="match status" value="1"/>
</dbReference>
<dbReference type="FunFam" id="1.20.1270.220:FF:000001">
    <property type="entry name" value="bromodomain-containing protein 2 isoform X1"/>
    <property type="match status" value="1"/>
</dbReference>
<dbReference type="FunFam" id="1.20.920.10:FF:000002">
    <property type="entry name" value="Bromodomain-containing protein 4"/>
    <property type="match status" value="1"/>
</dbReference>
<dbReference type="Gene3D" id="1.20.1270.220">
    <property type="match status" value="1"/>
</dbReference>
<dbReference type="Gene3D" id="1.20.920.10">
    <property type="entry name" value="Bromodomain-like"/>
    <property type="match status" value="2"/>
</dbReference>
<dbReference type="InterPro" id="IPR043508">
    <property type="entry name" value="Bromo_Brdt_I"/>
</dbReference>
<dbReference type="InterPro" id="IPR043509">
    <property type="entry name" value="Bromo_Brdt_II"/>
</dbReference>
<dbReference type="InterPro" id="IPR050935">
    <property type="entry name" value="Bromo_chromatin_reader"/>
</dbReference>
<dbReference type="InterPro" id="IPR001487">
    <property type="entry name" value="Bromodomain"/>
</dbReference>
<dbReference type="InterPro" id="IPR036427">
    <property type="entry name" value="Bromodomain-like_sf"/>
</dbReference>
<dbReference type="InterPro" id="IPR018359">
    <property type="entry name" value="Bromodomain_CS"/>
</dbReference>
<dbReference type="InterPro" id="IPR027353">
    <property type="entry name" value="NET_dom"/>
</dbReference>
<dbReference type="InterPro" id="IPR038336">
    <property type="entry name" value="NET_sf"/>
</dbReference>
<dbReference type="PANTHER" id="PTHR22880:SF240">
    <property type="entry name" value="BROMODOMAIN-CONTAINING PROTEIN 2"/>
    <property type="match status" value="1"/>
</dbReference>
<dbReference type="PANTHER" id="PTHR22880">
    <property type="entry name" value="FALZ-RELATED BROMODOMAIN-CONTAINING PROTEINS"/>
    <property type="match status" value="1"/>
</dbReference>
<dbReference type="Pfam" id="PF17035">
    <property type="entry name" value="BET"/>
    <property type="match status" value="1"/>
</dbReference>
<dbReference type="Pfam" id="PF00439">
    <property type="entry name" value="Bromodomain"/>
    <property type="match status" value="2"/>
</dbReference>
<dbReference type="PRINTS" id="PR00503">
    <property type="entry name" value="BROMODOMAIN"/>
</dbReference>
<dbReference type="SMART" id="SM00297">
    <property type="entry name" value="BROMO"/>
    <property type="match status" value="2"/>
</dbReference>
<dbReference type="SUPFAM" id="SSF47370">
    <property type="entry name" value="Bromodomain"/>
    <property type="match status" value="2"/>
</dbReference>
<dbReference type="PROSITE" id="PS00633">
    <property type="entry name" value="BROMODOMAIN_1"/>
    <property type="match status" value="2"/>
</dbReference>
<dbReference type="PROSITE" id="PS50014">
    <property type="entry name" value="BROMODOMAIN_2"/>
    <property type="match status" value="2"/>
</dbReference>
<dbReference type="PROSITE" id="PS51525">
    <property type="entry name" value="NET"/>
    <property type="match status" value="1"/>
</dbReference>
<feature type="chain" id="PRO_0000211180" description="Bromodomain-containing protein 2">
    <location>
        <begin position="1"/>
        <end position="801"/>
    </location>
</feature>
<feature type="domain" description="Bromo 1" evidence="3">
    <location>
        <begin position="74"/>
        <end position="180"/>
    </location>
</feature>
<feature type="domain" description="Bromo 2" evidence="3">
    <location>
        <begin position="344"/>
        <end position="453"/>
    </location>
</feature>
<feature type="domain" description="NET" evidence="4">
    <location>
        <begin position="632"/>
        <end position="714"/>
    </location>
</feature>
<feature type="region of interest" description="Disordered" evidence="5">
    <location>
        <begin position="53"/>
        <end position="73"/>
    </location>
</feature>
<feature type="region of interest" description="Disordered" evidence="5">
    <location>
        <begin position="268"/>
        <end position="349"/>
    </location>
</feature>
<feature type="region of interest" description="Disordered" evidence="5">
    <location>
        <begin position="456"/>
        <end position="647"/>
    </location>
</feature>
<feature type="region of interest" description="Disordered" evidence="5">
    <location>
        <begin position="737"/>
        <end position="801"/>
    </location>
</feature>
<feature type="short sequence motif" description="Nuclear localization signal" evidence="2">
    <location>
        <begin position="555"/>
        <end position="559"/>
    </location>
</feature>
<feature type="compositionally biased region" description="Low complexity" evidence="5">
    <location>
        <begin position="285"/>
        <end position="298"/>
    </location>
</feature>
<feature type="compositionally biased region" description="Basic and acidic residues" evidence="5">
    <location>
        <begin position="316"/>
        <end position="332"/>
    </location>
</feature>
<feature type="compositionally biased region" description="Acidic residues" evidence="5">
    <location>
        <begin position="481"/>
        <end position="514"/>
    </location>
</feature>
<feature type="compositionally biased region" description="Basic residues" evidence="5">
    <location>
        <begin position="544"/>
        <end position="566"/>
    </location>
</feature>
<feature type="compositionally biased region" description="Gly residues" evidence="5">
    <location>
        <begin position="592"/>
        <end position="612"/>
    </location>
</feature>
<feature type="compositionally biased region" description="Low complexity" evidence="5">
    <location>
        <begin position="763"/>
        <end position="795"/>
    </location>
</feature>
<feature type="binding site" evidence="20 39">
    <location>
        <position position="112"/>
    </location>
    <ligand>
        <name>a protein</name>
        <dbReference type="ChEBI" id="CHEBI:16541"/>
    </ligand>
    <ligandPart>
        <name>N(6)-acetyl-N(6)-methyl-L-lysine residue</name>
        <dbReference type="ChEBI" id="CHEBI:197459"/>
    </ligandPart>
</feature>
<feature type="binding site" evidence="20 39">
    <location>
        <position position="155"/>
    </location>
    <ligand>
        <name>a protein</name>
        <dbReference type="ChEBI" id="CHEBI:16541"/>
    </ligand>
    <ligandPart>
        <name>N(6)-acetyl-N(6)-methyl-L-lysine residue</name>
        <dbReference type="ChEBI" id="CHEBI:197459"/>
    </ligandPart>
</feature>
<feature type="binding site" evidence="12 29 31">
    <location>
        <position position="156"/>
    </location>
    <ligand>
        <name>a protein</name>
        <dbReference type="ChEBI" id="CHEBI:16541"/>
    </ligand>
    <ligandPart>
        <name>N(6)-acetyl-L-lysine residue</name>
        <dbReference type="ChEBI" id="CHEBI:61930"/>
    </ligandPart>
</feature>
<feature type="binding site" evidence="20 39">
    <location>
        <position position="156"/>
    </location>
    <ligand>
        <name>a protein</name>
        <dbReference type="ChEBI" id="CHEBI:16541"/>
    </ligand>
    <ligandPart>
        <name>N(6)-acetyl-N(6)-methyl-L-lysine residue</name>
        <dbReference type="ChEBI" id="CHEBI:197459"/>
    </ligandPart>
</feature>
<feature type="binding site" evidence="20 39">
    <location>
        <position position="157"/>
    </location>
    <ligand>
        <name>a protein</name>
        <dbReference type="ChEBI" id="CHEBI:16541"/>
    </ligand>
    <ligandPart>
        <name>N(6)-acetyl-N(6)-methyl-L-lysine residue</name>
        <dbReference type="ChEBI" id="CHEBI:197459"/>
    </ligandPart>
</feature>
<feature type="binding site" evidence="12 29 31">
    <location>
        <position position="160"/>
    </location>
    <ligand>
        <name>a protein</name>
        <dbReference type="ChEBI" id="CHEBI:16541"/>
    </ligand>
    <ligandPart>
        <name>N(6)-acetyl-L-lysine residue</name>
        <dbReference type="ChEBI" id="CHEBI:61930"/>
    </ligandPart>
</feature>
<feature type="binding site" evidence="12 29 31">
    <location>
        <position position="161"/>
    </location>
    <ligand>
        <name>a protein</name>
        <dbReference type="ChEBI" id="CHEBI:16541"/>
    </ligand>
    <ligandPart>
        <name>N(6)-acetyl-L-lysine residue</name>
        <dbReference type="ChEBI" id="CHEBI:61930"/>
    </ligandPart>
</feature>
<feature type="modified residue" description="N-acetylmethionine" evidence="41 43">
    <location>
        <position position="1"/>
    </location>
</feature>
<feature type="modified residue" description="Phosphothreonine" evidence="43">
    <location>
        <position position="6"/>
    </location>
</feature>
<feature type="modified residue" description="Phosphoserine" evidence="42">
    <location>
        <position position="37"/>
    </location>
</feature>
<feature type="modified residue" description="Phosphoserine" evidence="40 42 43 44 45 46">
    <location>
        <position position="298"/>
    </location>
</feature>
<feature type="modified residue" description="Phosphoserine" evidence="40 42 43 46">
    <location>
        <position position="301"/>
    </location>
</feature>
<feature type="modified residue" description="Phosphoserine" evidence="40 46">
    <location>
        <position position="305"/>
    </location>
</feature>
<feature type="modified residue" description="Phosphoserine" evidence="40 45">
    <location>
        <position position="633"/>
    </location>
</feature>
<feature type="splice variant" id="VSP_055028" description="In isoform 4." evidence="23">
    <location>
        <begin position="1"/>
        <end position="120"/>
    </location>
</feature>
<feature type="splice variant" id="VSP_055029" description="In isoform 3." evidence="23">
    <location>
        <begin position="1"/>
        <end position="47"/>
    </location>
</feature>
<feature type="splice variant" id="VSP_022600" description="In isoform 2." evidence="21">
    <original>L</original>
    <variation>LQAGVQWRDLGLLQPPLLGFKRFSCLSLPSSQDYRL</variation>
    <location>
        <position position="615"/>
    </location>
</feature>
<feature type="sequence variant" id="VAR_041904" description="In a glioblastoma multiforme sample; somatic mutation." evidence="9">
    <original>G</original>
    <variation>E</variation>
    <location>
        <position position="30"/>
    </location>
</feature>
<feature type="sequence variant" id="VAR_041905" description="In dbSNP:rs3918144." evidence="9">
    <original>A</original>
    <variation>G</variation>
    <location>
        <position position="49"/>
    </location>
</feature>
<feature type="sequence variant" id="VAR_041906" description="In dbSNP:rs55669504." evidence="9">
    <original>A</original>
    <variation>S</variation>
    <location>
        <position position="49"/>
    </location>
</feature>
<feature type="sequence variant" id="VAR_041907" description="In dbSNP:rs35952031." evidence="9">
    <original>A</original>
    <variation>P</variation>
    <location>
        <position position="212"/>
    </location>
</feature>
<feature type="sequence variant" id="VAR_022132" description="In dbSNP:rs176250." evidence="6 9">
    <original>L</original>
    <variation>F</variation>
    <location>
        <position position="238"/>
    </location>
</feature>
<feature type="sequence variant" id="VAR_041908" description="In dbSNP:rs35294809." evidence="9">
    <original>P</original>
    <variation>Q</variation>
    <location>
        <position position="260"/>
    </location>
</feature>
<feature type="sequence variant" id="VAR_029300" description="In dbSNP:rs3918143." evidence="9">
    <original>A</original>
    <variation>V</variation>
    <location>
        <position position="474"/>
    </location>
</feature>
<feature type="sequence variant" id="VAR_029301" description="In dbSNP:rs1049369.">
    <original>R</original>
    <variation>K</variation>
    <location>
        <position position="547"/>
    </location>
</feature>
<feature type="sequence variant" id="VAR_041909" description="In a gastric adenocarcinoma sample; somatic mutation." evidence="9">
    <original>R</original>
    <variation>G</variation>
    <location>
        <position position="558"/>
    </location>
</feature>
<feature type="sequence variant" id="VAR_041910" description="In dbSNP:rs34530779." evidence="9">
    <original>A</original>
    <variation>T</variation>
    <location>
        <position position="569"/>
    </location>
</feature>
<feature type="sequence variant" id="VAR_041911" description="In dbSNP:rs55952113." evidence="9">
    <original>A</original>
    <variation>P</variation>
    <location>
        <position position="599"/>
    </location>
</feature>
<feature type="sequence variant" id="VAR_041912" description="In a glioblastoma multiforme sample; somatic mutation." evidence="9">
    <original>P</original>
    <variation>L</variation>
    <location>
        <position position="714"/>
    </location>
</feature>
<feature type="mutagenesis site" description="Loss of homodimerization." evidence="8">
    <original>Q</original>
    <variation>A</variation>
    <location>
        <position position="78"/>
    </location>
</feature>
<feature type="mutagenesis site" description="Abolished binding to histone H4 acetylated at 'Lys-12' (H4K12ac)." evidence="13">
    <original>PD</original>
    <variation>AA</variation>
    <location>
        <begin position="111"/>
        <end position="112"/>
    </location>
</feature>
<feature type="mutagenesis site" description="Abolished binding to histone H4 acetylated at 'Lys-12' (H4K12ac)." evidence="13">
    <original>DYHKI</original>
    <variation>AHYA</variation>
    <location>
        <begin position="112"/>
        <end position="116"/>
    </location>
</feature>
<feature type="mutagenesis site" description="Abolished binding to histone H4 acetylated at 'Lys-12' (H4K12ac)." evidence="13">
    <original>Y</original>
    <variation>A</variation>
    <location>
        <position position="113"/>
    </location>
</feature>
<feature type="mutagenesis site" description="Loss of homodimerization." evidence="8">
    <original>MQ</original>
    <variation>AA</variation>
    <location>
        <begin position="142"/>
        <end position="143"/>
    </location>
</feature>
<feature type="mutagenesis site" description="Loss of homodimerization." evidence="8">
    <original>Y</original>
    <variation>K</variation>
    <location>
        <position position="153"/>
    </location>
</feature>
<feature type="mutagenesis site" description="Partial loss of homodimerization; when associated with A-182. Abolished binding to histone H4 acetylated at 'Lys-12' (H4K12ac)." evidence="8 13">
    <original>I</original>
    <variation>A</variation>
    <location>
        <position position="154"/>
    </location>
</feature>
<feature type="mutagenesis site" description="Abolished binding to histone H4 acetylated at 'Lys-12' (H4K12ac)." evidence="13">
    <original>NKPTD</original>
    <variation>AKPTA</variation>
    <location>
        <begin position="156"/>
        <end position="160"/>
    </location>
</feature>
<feature type="mutagenesis site" description="Abolished binding to histone H4 acetylated at 'Lys-12' (H4K12ac). Abolished binding to histone H4 acetyl-methylated." evidence="13 20">
    <original>N</original>
    <variation>A</variation>
    <location>
        <position position="156"/>
    </location>
</feature>
<feature type="mutagenesis site" description="Abolished binding to histone H4 acetylated at 'Lys-12' (H4K12ac)." evidence="13">
    <original>KPTD</original>
    <variation>APTA</variation>
    <location>
        <begin position="157"/>
        <end position="160"/>
    </location>
</feature>
<feature type="mutagenesis site" description="Abolished binding to histone H4 acetylated at 'Lys-12' (H4K12ac)." evidence="13">
    <original>P</original>
    <variation>D</variation>
    <location>
        <position position="158"/>
    </location>
</feature>
<feature type="mutagenesis site" description="Abolished binding to histone H4 acetylated at 'Lys-12' (H4K12ac)." evidence="13">
    <original>D</original>
    <variation>A</variation>
    <location>
        <position position="160"/>
    </location>
</feature>
<feature type="mutagenesis site" description="Loss of homodimerization." evidence="8">
    <original>E</original>
    <variation>A</variation>
    <location>
        <position position="170"/>
    </location>
</feature>
<feature type="mutagenesis site" description="Loss of homodimerization." evidence="8">
    <original>L</original>
    <variation>E</variation>
    <location>
        <position position="174"/>
    </location>
</feature>
<feature type="mutagenesis site" description="Loss of homodimerization." evidence="8">
    <original>V</original>
    <variation>E</variation>
    <location>
        <position position="177"/>
    </location>
</feature>
<feature type="mutagenesis site" description="Partial loss of homodimerization; when associated with A-154." evidence="8">
    <original>Q</original>
    <variation>A</variation>
    <location>
        <position position="182"/>
    </location>
</feature>
<feature type="mutagenesis site" description="Abolished binding to histone H4 acetylated at 'Lys-12' (H4K12ac)." evidence="10">
    <original>V</original>
    <variation>A</variation>
    <location>
        <position position="376"/>
    </location>
</feature>
<feature type="mutagenesis site" description="Reduced binding to histone H4 acetylated at 'Lys-12' (H4K12ac)." evidence="10">
    <original>L</original>
    <variation>A</variation>
    <location>
        <position position="381"/>
    </location>
</feature>
<feature type="mutagenesis site" description="Reduced binding to histone H4 acetylated at 'Lys-12' (H4K12ac)." evidence="10">
    <original>L</original>
    <variation>A</variation>
    <location>
        <position position="383"/>
    </location>
</feature>
<feature type="mutagenesis site" description="Abolished binding to histone H4 acetylated at 'Lys-12' (H4K12ac)." evidence="10">
    <original>N</original>
    <variation>A</variation>
    <location>
        <position position="429"/>
    </location>
</feature>
<feature type="sequence conflict" description="In Ref. 4; CAH56179." evidence="26" ref="4">
    <original>S</original>
    <variation>F</variation>
    <location>
        <position position="490"/>
    </location>
</feature>
<feature type="helix" evidence="48">
    <location>
        <begin position="77"/>
        <end position="84"/>
    </location>
</feature>
<feature type="helix" evidence="48">
    <location>
        <begin position="86"/>
        <end position="91"/>
    </location>
</feature>
<feature type="helix" evidence="48">
    <location>
        <begin position="97"/>
        <end position="99"/>
    </location>
</feature>
<feature type="helix" evidence="48">
    <location>
        <begin position="105"/>
        <end position="108"/>
    </location>
</feature>
<feature type="helix" evidence="48">
    <location>
        <begin position="113"/>
        <end position="116"/>
    </location>
</feature>
<feature type="helix" evidence="48">
    <location>
        <begin position="123"/>
        <end position="131"/>
    </location>
</feature>
<feature type="helix" evidence="48">
    <location>
        <begin position="138"/>
        <end position="155"/>
    </location>
</feature>
<feature type="helix" evidence="48">
    <location>
        <begin position="161"/>
        <end position="177"/>
    </location>
</feature>
<feature type="strand" evidence="51">
    <location>
        <begin position="186"/>
        <end position="189"/>
    </location>
</feature>
<feature type="helix" evidence="49">
    <location>
        <begin position="348"/>
        <end position="360"/>
    </location>
</feature>
<feature type="helix" evidence="49">
    <location>
        <begin position="363"/>
        <end position="365"/>
    </location>
</feature>
<feature type="helix" evidence="49">
    <location>
        <begin position="366"/>
        <end position="369"/>
    </location>
</feature>
<feature type="helix" evidence="49">
    <location>
        <begin position="370"/>
        <end position="372"/>
    </location>
</feature>
<feature type="helix" evidence="49">
    <location>
        <begin position="378"/>
        <end position="381"/>
    </location>
</feature>
<feature type="helix" evidence="49">
    <location>
        <begin position="386"/>
        <end position="389"/>
    </location>
</feature>
<feature type="helix" evidence="49">
    <location>
        <begin position="396"/>
        <end position="404"/>
    </location>
</feature>
<feature type="turn" evidence="47">
    <location>
        <begin position="406"/>
        <end position="408"/>
    </location>
</feature>
<feature type="helix" evidence="49">
    <location>
        <begin position="411"/>
        <end position="428"/>
    </location>
</feature>
<feature type="strand" evidence="52">
    <location>
        <begin position="431"/>
        <end position="433"/>
    </location>
</feature>
<feature type="helix" evidence="49">
    <location>
        <begin position="434"/>
        <end position="450"/>
    </location>
</feature>
<feature type="strand" evidence="50">
    <location>
        <begin position="628"/>
        <end position="631"/>
    </location>
</feature>
<feature type="turn" evidence="50">
    <location>
        <begin position="634"/>
        <end position="638"/>
    </location>
</feature>
<feature type="helix" evidence="50">
    <location>
        <begin position="644"/>
        <end position="654"/>
    </location>
</feature>
<feature type="helix" evidence="50">
    <location>
        <begin position="659"/>
        <end position="670"/>
    </location>
</feature>
<feature type="turn" evidence="50">
    <location>
        <begin position="674"/>
        <end position="678"/>
    </location>
</feature>
<feature type="strand" evidence="50">
    <location>
        <begin position="681"/>
        <end position="683"/>
    </location>
</feature>
<feature type="turn" evidence="50">
    <location>
        <begin position="688"/>
        <end position="690"/>
    </location>
</feature>
<feature type="helix" evidence="50">
    <location>
        <begin position="693"/>
        <end position="707"/>
    </location>
</feature>
<feature type="helix" evidence="50">
    <location>
        <begin position="725"/>
        <end position="743"/>
    </location>
</feature>
<name>BRD2_HUMAN</name>
<keyword id="KW-0002">3D-structure</keyword>
<keyword id="KW-0007">Acetylation</keyword>
<keyword id="KW-0025">Alternative splicing</keyword>
<keyword id="KW-0103">Bromodomain</keyword>
<keyword id="KW-0156">Chromatin regulator</keyword>
<keyword id="KW-0158">Chromosome</keyword>
<keyword id="KW-0945">Host-virus interaction</keyword>
<keyword id="KW-0539">Nucleus</keyword>
<keyword id="KW-0597">Phosphoprotein</keyword>
<keyword id="KW-1267">Proteomics identification</keyword>
<keyword id="KW-1185">Reference proteome</keyword>
<keyword id="KW-0677">Repeat</keyword>
<keyword id="KW-0804">Transcription</keyword>
<keyword id="KW-0805">Transcription regulation</keyword>